<organism>
    <name type="scientific">Homo sapiens</name>
    <name type="common">Human</name>
    <dbReference type="NCBI Taxonomy" id="9606"/>
    <lineage>
        <taxon>Eukaryota</taxon>
        <taxon>Metazoa</taxon>
        <taxon>Chordata</taxon>
        <taxon>Craniata</taxon>
        <taxon>Vertebrata</taxon>
        <taxon>Euteleostomi</taxon>
        <taxon>Mammalia</taxon>
        <taxon>Eutheria</taxon>
        <taxon>Euarchontoglires</taxon>
        <taxon>Primates</taxon>
        <taxon>Haplorrhini</taxon>
        <taxon>Catarrhini</taxon>
        <taxon>Hominidae</taxon>
        <taxon>Homo</taxon>
    </lineage>
</organism>
<protein>
    <recommendedName>
        <fullName>Vascular endothelial growth factor A, long form</fullName>
        <shortName evidence="27 28">L-VEGF</shortName>
    </recommendedName>
    <alternativeName>
        <fullName>Vascular permeability factor</fullName>
        <shortName>VPF</shortName>
    </alternativeName>
    <component>
        <recommendedName>
            <fullName evidence="28">N-VEGF</fullName>
        </recommendedName>
    </component>
    <component>
        <recommendedName>
            <fullName evidence="28">VEGFA</fullName>
        </recommendedName>
    </component>
</protein>
<comment type="function">
    <molecule>N-VEGF</molecule>
    <text evidence="2 21">Participates in the induction of key genes involved in the response to hypoxia and in the induction of angiogenesis such as HIF1A (PubMed:35455969). Involved in protecting cells from hypoxia-mediated cell death (By similarity).</text>
</comment>
<comment type="function">
    <molecule>VEGFA</molecule>
    <text evidence="2 5 13 14 18 20">Growth factor active in angiogenesis, vasculogenesis and endothelial cell growth (PubMed:34530889). Induces endothelial cell proliferation, promotes cell migration, inhibits apoptosis and induces permeabilization of blood vessels. Binds to the FLT1/VEGFR1 and KDR/VEGFR2 receptors, heparan sulfate and heparin. Binds to the NRP1/neuropilin-1 receptor. Binding to NRP1 initiates a signaling pathway needed for motor neuron axon guidance and cell body migration, including for the caudal migration of facial motor neurons from rhombomere 4 to rhombomere 6 during embryonic development (By similarity). Also binds the DEAR/FBXW7-AS1 receptor (PubMed:17446437).</text>
</comment>
<comment type="function">
    <molecule>Isoform VEGF165B</molecule>
    <text evidence="11">Binds to the KDR receptor but does not activate downstream signaling pathways, does not activate angiogenesis and inhibits tumor growth.</text>
</comment>
<comment type="subunit">
    <molecule>VEGFA</molecule>
    <text evidence="1 18 19 20">Homodimer; disulfide-linked (By similarity). Also found as heterodimer with PGF (By similarity). Interacts with NRP1 (PubMed:26503042). Interacts with isoform 2 of BSG (PubMed:25825981). Interacts with CD82; this interaction inhibits VEGFA-mediated signaling pathway (PubMed:34530889).</text>
</comment>
<comment type="interaction">
    <interactant intactId="EBI-1026643">
        <id>P15692</id>
    </interactant>
    <interactant intactId="EBI-1026718">
        <id>P17948</id>
        <label>FLT1</label>
    </interactant>
    <organismsDiffer>false</organismsDiffer>
    <experiments>5</experiments>
</comment>
<comment type="interaction">
    <interactant intactId="EBI-1026643">
        <id>P15692</id>
    </interactant>
    <interactant intactId="EBI-1005487">
        <id>P35968</id>
        <label>KDR</label>
    </interactant>
    <organismsDiffer>false</organismsDiffer>
    <experiments>5</experiments>
</comment>
<comment type="interaction">
    <interactant intactId="EBI-1026643">
        <id>P15692</id>
    </interactant>
    <interactant intactId="EBI-1187100">
        <id>O14786</id>
        <label>NRP1</label>
    </interactant>
    <organismsDiffer>false</organismsDiffer>
    <experiments>4</experiments>
</comment>
<comment type="interaction">
    <interactant intactId="EBI-1026643">
        <id>P15692</id>
    </interactant>
    <interactant intactId="EBI-1026643">
        <id>P15692</id>
        <label>VEGFA</label>
    </interactant>
    <organismsDiffer>false</organismsDiffer>
    <experiments>10</experiments>
</comment>
<comment type="interaction">
    <interactant intactId="EBI-1026691">
        <id>P15692-4</id>
    </interactant>
    <interactant intactId="EBI-1026718">
        <id>P17948</id>
        <label>FLT1</label>
    </interactant>
    <organismsDiffer>false</organismsDiffer>
    <experiments>3</experiments>
</comment>
<comment type="interaction">
    <interactant intactId="EBI-1026691">
        <id>P15692-4</id>
    </interactant>
    <interactant intactId="EBI-1005487">
        <id>P35968</id>
        <label>KDR</label>
    </interactant>
    <organismsDiffer>false</organismsDiffer>
    <experiments>8</experiments>
</comment>
<comment type="interaction">
    <interactant intactId="EBI-1026691">
        <id>P15692-4</id>
    </interactant>
    <interactant intactId="EBI-6285281">
        <id>O14786-2</id>
        <label>NRP1</label>
    </interactant>
    <organismsDiffer>false</organismsDiffer>
    <experiments>4</experiments>
</comment>
<comment type="interaction">
    <interactant intactId="EBI-1026691">
        <id>P15692-4</id>
    </interactant>
    <interactant intactId="EBI-1026691">
        <id>P15692-4</id>
        <label>VEGFA</label>
    </interactant>
    <organismsDiffer>false</organismsDiffer>
    <experiments>5</experiments>
</comment>
<comment type="interaction">
    <interactant intactId="EBI-6622053">
        <id>P15692-12</id>
    </interactant>
    <interactant intactId="EBI-17565645">
        <id>P08034</id>
        <label>GJB1</label>
    </interactant>
    <organismsDiffer>false</organismsDiffer>
    <experiments>3</experiments>
</comment>
<comment type="interaction">
    <interactant intactId="EBI-6622053">
        <id>P15692-12</id>
    </interactant>
    <interactant intactId="EBI-11911016">
        <id>P80188</id>
        <label>LCN2</label>
    </interactant>
    <organismsDiffer>false</organismsDiffer>
    <experiments>3</experiments>
</comment>
<comment type="interaction">
    <interactant intactId="EBI-6622053">
        <id>P15692-12</id>
    </interactant>
    <interactant intactId="EBI-17295964">
        <id>Q9NQQ7-3</id>
        <label>SLC35C2</label>
    </interactant>
    <organismsDiffer>false</organismsDiffer>
    <experiments>3</experiments>
</comment>
<comment type="interaction">
    <interactant intactId="EBI-6622053">
        <id>P15692-12</id>
    </interactant>
    <interactant intactId="EBI-10982110">
        <id>Q96Q45-2</id>
        <label>TMEM237</label>
    </interactant>
    <organismsDiffer>false</organismsDiffer>
    <experiments>3</experiments>
</comment>
<comment type="subcellular location">
    <molecule>N-VEGF</molecule>
    <subcellularLocation>
        <location evidence="12">Cytoplasm</location>
    </subcellularLocation>
    <subcellularLocation>
        <location evidence="12 21">Nucleus</location>
    </subcellularLocation>
    <text evidence="12 21">Cytoplasmic in normoxic conditions and localizes to the nucleus under hypoxic conditions.</text>
</comment>
<comment type="subcellular location">
    <molecule>VEGFA</molecule>
    <subcellularLocation>
        <location evidence="6 7 12">Secreted</location>
    </subcellularLocation>
</comment>
<comment type="subcellular location">
    <molecule>Isoform L-VEGF189</molecule>
    <subcellularLocation>
        <location evidence="7">Endoplasmic reticulum</location>
    </subcellularLocation>
    <subcellularLocation>
        <location evidence="7">Golgi apparatus</location>
    </subcellularLocation>
    <subcellularLocation>
        <location evidence="6">Secreted</location>
        <location evidence="6">Extracellular space</location>
        <location evidence="6">Extracellular matrix</location>
    </subcellularLocation>
</comment>
<comment type="subcellular location">
    <molecule>Isoform VEGF121</molecule>
    <subcellularLocation>
        <location evidence="12">Secreted</location>
    </subcellularLocation>
</comment>
<comment type="subcellular location">
    <molecule>Isoform VEGF165</molecule>
    <subcellularLocation>
        <location evidence="12">Secreted</location>
    </subcellularLocation>
</comment>
<comment type="subcellular location">
    <molecule>Isoform VEGF189</molecule>
    <subcellularLocation>
        <location>Secreted</location>
    </subcellularLocation>
    <text>Cell-associated after secretion and is bound avidly by heparin and the extracellular matrix, although it may be released as a soluble form by heparin, heparinase or plasmin.</text>
</comment>
<comment type="alternative products">
    <event type="alternative promoter"/>
    <event type="alternative splicing"/>
    <event type="alternative initiation"/>
    <isoform>
        <id>P15692-13</id>
        <name>L-VEGF189</name>
        <sequence type="displayed"/>
    </isoform>
    <isoform>
        <id>P15692-1</id>
        <name>VEGF206</name>
        <sequence type="described" ref="VSP_061891 VSP_061898"/>
    </isoform>
    <isoform>
        <id>P15692-2</id>
        <name>VEGF189</name>
        <sequence type="described" ref="VSP_061891"/>
    </isoform>
    <isoform>
        <id>P15692-3</id>
        <name>VEGF183</name>
        <sequence type="described" ref="VSP_061891 VSP_061897"/>
    </isoform>
    <isoform>
        <id>P15692-4</id>
        <name>VEGF165</name>
        <name>VEGF</name>
        <sequence type="described" ref="VSP_061891 VSP_061894"/>
    </isoform>
    <isoform>
        <id>P15692-5</id>
        <name>VEGF148</name>
        <sequence type="described" ref="VSP_061891 VSP_061894 VSP_061901 VSP_061902"/>
    </isoform>
    <isoform>
        <id>P15692-6</id>
        <name>VEGF145</name>
        <sequence type="described" ref="VSP_061891 VSP_061899 VSP_061900"/>
    </isoform>
    <isoform>
        <id>P15692-8</id>
        <name>VEGF165B</name>
        <sequence type="described" ref="VSP_061891 VSP_061894 VSP_061903"/>
    </isoform>
    <isoform>
        <id>P15692-9</id>
        <name>VEGF121</name>
        <sequence type="described" ref="VSP_061891 VSP_061895 VSP_061896"/>
    </isoform>
    <isoform>
        <id>P15692-10</id>
        <name>VEGF111</name>
        <sequence type="described" ref="VSP_061891 VSP_061892 VSP_061893"/>
    </isoform>
    <isoform>
        <id>P15692-11</id>
        <name>L-VEGF165</name>
        <sequence type="described" ref="VSP_061894"/>
    </isoform>
    <isoform>
        <id>P15692-12</id>
        <name>L-VEGF121</name>
        <sequence type="described" ref="VSP_061895 VSP_061896"/>
    </isoform>
    <isoform>
        <id>P15692-14</id>
        <name>L-VEGF206</name>
        <sequence type="described" ref="VSP_061898"/>
    </isoform>
    <isoform>
        <id>P15692-15</id>
        <name>15</name>
        <sequence type="described" ref="VSP_061894 VSP_061903"/>
    </isoform>
    <isoform>
        <id>P15692-16</id>
        <name>16</name>
        <sequence type="described" ref="VSP_061897"/>
    </isoform>
    <isoform>
        <id>P15692-17</id>
        <name>17</name>
        <sequence type="described" ref="VSP_061894 VSP_061901 VSP_061902"/>
    </isoform>
    <isoform>
        <id>P15692-18</id>
        <name>18</name>
        <sequence type="described" ref="VSP_061892 VSP_061893"/>
    </isoform>
    <text>A subset of isoforms are produced by use of an alternative upstream CUG codon, giving rise to long isoforms which have an N-terminal extension compared to the classical shorter AUG-initiated forms. These longer forms are post-translationally processed to produce an N-terminal N-VEGF chain and a C-terminal VEGFA chain.</text>
</comment>
<comment type="tissue specificity">
    <text evidence="16">Higher expression in pituitary tumors than the pituitary gland.</text>
</comment>
<comment type="tissue specificity">
    <molecule>Isoform VEGF189</molecule>
    <text>Widely expressed.</text>
</comment>
<comment type="tissue specificity">
    <molecule>Isoform VEGF165</molecule>
    <text>Widely expressed.</text>
</comment>
<comment type="tissue specificity">
    <molecule>Isoform VEGF121</molecule>
    <text>Widely expressed.</text>
</comment>
<comment type="tissue specificity">
    <molecule>Isoform VEGF206</molecule>
    <text>Not widely expressed.</text>
</comment>
<comment type="tissue specificity">
    <molecule>Isoform VEGF145</molecule>
    <text>Not widely expressed.</text>
</comment>
<comment type="induction">
    <text evidence="16">By hypoxia. Regulated by growth factors, cytokines, gonadotropins, nitric oxide, hypoglycemia and oncogenic mutations.</text>
</comment>
<comment type="PTM">
    <molecule>Vascular endothelial growth factor A, long form</molecule>
    <text evidence="7">Produced by use of an alternative upstream CUG codon and post-translationally processed into the N-terminal N-VEGF form and the C-terminal secreted VEGFA form.</text>
</comment>
<comment type="disease" evidence="8">
    <disease id="DI-02754">
        <name>Microvascular complications of diabetes 1</name>
        <acronym>MVCD1</acronym>
        <description>Pathological conditions that develop in numerous tissues and organs as a consequence of diabetes mellitus. They include diabetic retinopathy, diabetic nephropathy leading to end-stage renal disease, and diabetic neuropathy. Diabetic retinopathy remains the major cause of new-onset blindness among diabetic adults. It is characterized by vascular permeability and increased tissue ischemia and angiogenesis.</description>
        <dbReference type="MIM" id="603933"/>
    </disease>
    <text>Disease susceptibility is associated with variants affecting the gene represented in this entry.</text>
</comment>
<comment type="miscellaneous">
    <molecule>Isoform L-VEGF189</molecule>
    <text>Produced by alternative promoter usage and alternative initiation. Starts at an alternative upstream CUG codon.</text>
</comment>
<comment type="miscellaneous">
    <molecule>Isoform L-VEGF165</molecule>
    <text>Produced by alternative promoter usage and alternative initiation. Starts at an alternative upstream CUG codon.</text>
</comment>
<comment type="miscellaneous">
    <molecule>Isoform L-VEGF121</molecule>
    <text>Produced by alternative promoter usage and alternative initiation. Starts at an alternative upstream CUG codon.</text>
</comment>
<comment type="miscellaneous">
    <molecule>Isoform L-VEGF206</molecule>
    <text evidence="29">Produced by alternative promoter usage and alternative initiation. Starts at an alternative upstream CUG codon.</text>
</comment>
<comment type="miscellaneous">
    <molecule>Isoform 15</molecule>
    <text evidence="29">Starts at an alternative upstream CUG codon.</text>
</comment>
<comment type="miscellaneous">
    <molecule>Isoform 16</molecule>
    <text evidence="29">Starts at an alternative upstream CUG codon.</text>
</comment>
<comment type="miscellaneous">
    <molecule>Isoform 17</molecule>
    <text evidence="29">Starts at an alternative upstream CUG codon.</text>
</comment>
<comment type="miscellaneous">
    <molecule>Isoform 18</molecule>
    <text evidence="29">Starts at an alternative upstream CUG codon.</text>
</comment>
<comment type="similarity">
    <text evidence="29">Belongs to the PDGF/VEGF growth factor family.</text>
</comment>
<comment type="sequence caution" evidence="29">
    <conflict type="erroneous initiation">
        <sequence resource="EMBL-CDS" id="AAC63102"/>
    </conflict>
</comment>
<comment type="sequence caution" evidence="29">
    <conflict type="miscellaneous discrepancy">
        <sequence resource="EMBL-CDS" id="AAC63143"/>
    </conflict>
    <text>Unusual initiator. The initiator methionine is coded by a non-canonical CTG leucine codon.</text>
</comment>
<comment type="online information" name="Wikipedia">
    <link uri="https://en.wikipedia.org/wiki/Vascular_endothelial_growth_factor"/>
    <text>VEGF entry</text>
</comment>
<keyword id="KW-0002">3D-structure</keyword>
<keyword id="KW-0024">Alternative initiation</keyword>
<keyword id="KW-0877">Alternative promoter usage</keyword>
<keyword id="KW-0025">Alternative splicing</keyword>
<keyword id="KW-0037">Angiogenesis</keyword>
<keyword id="KW-0963">Cytoplasm</keyword>
<keyword id="KW-0217">Developmental protein</keyword>
<keyword id="KW-0221">Differentiation</keyword>
<keyword id="KW-0903">Direct protein sequencing</keyword>
<keyword id="KW-1015">Disulfide bond</keyword>
<keyword id="KW-0256">Endoplasmic reticulum</keyword>
<keyword id="KW-0272">Extracellular matrix</keyword>
<keyword id="KW-0325">Glycoprotein</keyword>
<keyword id="KW-0333">Golgi apparatus</keyword>
<keyword id="KW-0339">Growth factor</keyword>
<keyword id="KW-0358">Heparin-binding</keyword>
<keyword id="KW-0497">Mitogen</keyword>
<keyword id="KW-0539">Nucleus</keyword>
<keyword id="KW-1267">Proteomics identification</keyword>
<keyword id="KW-1185">Reference proteome</keyword>
<keyword id="KW-0964">Secreted</keyword>
<feature type="chain" id="PRO_0000458064" description="Vascular endothelial growth factor A, long form">
    <location>
        <begin position="1"/>
        <end position="395"/>
    </location>
</feature>
<feature type="chain" id="PRO_0000458065" description="N-VEGF" evidence="7">
    <location>
        <begin position="1"/>
        <end status="unknown"/>
    </location>
</feature>
<feature type="chain" id="PRO_0000458066" description="VEGFA" evidence="7">
    <location>
        <begin status="unknown"/>
        <end position="395"/>
    </location>
</feature>
<feature type="region of interest" description="Disordered" evidence="3">
    <location>
        <begin position="1"/>
        <end position="45"/>
    </location>
</feature>
<feature type="region of interest" description="Disordered" evidence="3">
    <location>
        <begin position="73"/>
        <end position="175"/>
    </location>
</feature>
<feature type="region of interest" description="Disordered" evidence="3">
    <location>
        <begin position="314"/>
        <end position="344"/>
    </location>
</feature>
<feature type="compositionally biased region" description="Low complexity" evidence="3">
    <location>
        <begin position="73"/>
        <end position="85"/>
    </location>
</feature>
<feature type="compositionally biased region" description="Acidic residues" evidence="3">
    <location>
        <begin position="91"/>
        <end position="102"/>
    </location>
</feature>
<feature type="compositionally biased region" description="Low complexity" evidence="3">
    <location>
        <begin position="123"/>
        <end position="143"/>
    </location>
</feature>
<feature type="compositionally biased region" description="Low complexity" evidence="3">
    <location>
        <begin position="165"/>
        <end position="175"/>
    </location>
</feature>
<feature type="compositionally biased region" description="Basic and acidic residues" evidence="3">
    <location>
        <begin position="314"/>
        <end position="323"/>
    </location>
</feature>
<feature type="compositionally biased region" description="Basic residues" evidence="3">
    <location>
        <begin position="324"/>
        <end position="340"/>
    </location>
</feature>
<feature type="glycosylation site" description="N-linked (GlcNAc...) asparagine">
    <location>
        <position position="281"/>
    </location>
</feature>
<feature type="disulfide bond">
    <location>
        <begin position="232"/>
        <end position="274"/>
    </location>
</feature>
<feature type="disulfide bond" description="Interchain">
    <location>
        <position position="257"/>
    </location>
</feature>
<feature type="disulfide bond">
    <location>
        <begin position="263"/>
        <end position="308"/>
    </location>
</feature>
<feature type="disulfide bond" description="Interchain">
    <location>
        <position position="266"/>
    </location>
</feature>
<feature type="disulfide bond">
    <location>
        <begin position="267"/>
        <end position="310"/>
    </location>
</feature>
<feature type="splice variant" id="VSP_061891" description="In isoform VEGF206, isoform VEGF189, isoform VEGF183, isoform VEGF165, isoform VEGF148, isoform VEGF145, isoform VEGF165B, isoform VEGF121 and isoform VEGF111." evidence="4 9 15 17 22 24 25 26">
    <location>
        <begin position="1"/>
        <end position="180"/>
    </location>
</feature>
<feature type="splice variant" id="VSP_061892" description="In isoform VEGF111 and isoform 18." evidence="26">
    <original>PKKDRA</original>
    <variation>CDKPRR</variation>
    <location>
        <begin position="312"/>
        <end position="317"/>
    </location>
</feature>
<feature type="splice variant" id="VSP_061893" description="In isoform VEGF111 and isoform 18." evidence="26">
    <location>
        <begin position="318"/>
        <end position="395"/>
    </location>
</feature>
<feature type="splice variant" id="VSP_061894" description="In isoform VEGF165, isoform VEGF148, isoform VEGF165B, isoform L-VEGF165, isoform 15 and isoform 17." evidence="4 9 17 23">
    <original>KKSVRGKGKGQKRKRKKSRYKSWSV</original>
    <variation>N</variation>
    <location>
        <begin position="321"/>
        <end position="345"/>
    </location>
</feature>
<feature type="splice variant" id="VSP_061895" description="In isoform VEGF121 and isoform L-VEGF121." evidence="10 25">
    <original>KSVRGK</original>
    <variation>CDKPRR</variation>
    <location>
        <begin position="322"/>
        <end position="327"/>
    </location>
</feature>
<feature type="splice variant" id="VSP_061896" description="In isoform VEGF121 and isoform L-VEGF121." evidence="10 25">
    <location>
        <begin position="328"/>
        <end position="395"/>
    </location>
</feature>
<feature type="splice variant" id="VSP_061897" description="In isoform VEGF183 and isoform 16." evidence="24">
    <original>RYKSWSV</original>
    <variation>R</variation>
    <location>
        <begin position="339"/>
        <end position="345"/>
    </location>
</feature>
<feature type="splice variant" id="VSP_061898" description="In isoform VEGF206 and isoform L-VEGF206." evidence="15">
    <original>V</original>
    <variation>VYVGARCCLMPWSLPGPH</variation>
    <location>
        <position position="345"/>
    </location>
</feature>
<feature type="splice variant" id="VSP_061899" description="In isoform VEGF145." evidence="22">
    <original>PCGPCS</original>
    <variation>CDKPRR</variation>
    <location>
        <begin position="346"/>
        <end position="351"/>
    </location>
</feature>
<feature type="splice variant" id="VSP_061900" description="In isoform VEGF145." evidence="22">
    <location>
        <begin position="352"/>
        <end position="395"/>
    </location>
</feature>
<feature type="splice variant" id="VSP_061901" description="In isoform VEGF148 and isoform 17." evidence="4">
    <original>A</original>
    <variation>M</variation>
    <location>
        <position position="378"/>
    </location>
</feature>
<feature type="splice variant" id="VSP_061902" description="In isoform VEGF148 and isoform 17." evidence="4">
    <location>
        <begin position="379"/>
        <end position="395"/>
    </location>
</feature>
<feature type="splice variant" id="VSP_061903" description="In isoform VEGF165B and isoform 15." evidence="9">
    <original>CDKPRR</original>
    <variation>SLTRKD</variation>
    <location>
        <begin position="390"/>
        <end position="395"/>
    </location>
</feature>
<feature type="sequence conflict" description="In Ref. 8; AAC63143." evidence="29" ref="8">
    <original>C</original>
    <variation>S</variation>
    <location>
        <position position="267"/>
    </location>
</feature>
<feature type="sequence conflict" description="In Ref. 8; AAC63143." evidence="29" ref="8">
    <original>D</original>
    <variation>H</variation>
    <location>
        <position position="373"/>
    </location>
</feature>
<feature type="helix" evidence="31">
    <location>
        <begin position="223"/>
        <end position="230"/>
    </location>
</feature>
<feature type="strand" evidence="31">
    <location>
        <begin position="231"/>
        <end position="240"/>
    </location>
</feature>
<feature type="helix" evidence="31">
    <location>
        <begin position="241"/>
        <end position="244"/>
    </location>
</feature>
<feature type="helix" evidence="31">
    <location>
        <begin position="246"/>
        <end position="248"/>
    </location>
</feature>
<feature type="strand" evidence="31">
    <location>
        <begin position="251"/>
        <end position="264"/>
    </location>
</feature>
<feature type="strand" evidence="31">
    <location>
        <begin position="273"/>
        <end position="289"/>
    </location>
</feature>
<feature type="turn" evidence="33">
    <location>
        <begin position="291"/>
        <end position="293"/>
    </location>
</feature>
<feature type="strand" evidence="31">
    <location>
        <begin position="296"/>
        <end position="311"/>
    </location>
</feature>
<feature type="strand" evidence="32">
    <location>
        <begin position="352"/>
        <end position="354"/>
    </location>
</feature>
<feature type="strand" evidence="32">
    <location>
        <begin position="357"/>
        <end position="360"/>
    </location>
</feature>
<feature type="turn" evidence="32">
    <location>
        <begin position="362"/>
        <end position="364"/>
    </location>
</feature>
<feature type="strand" evidence="32">
    <location>
        <begin position="367"/>
        <end position="371"/>
    </location>
</feature>
<feature type="helix" evidence="32">
    <location>
        <begin position="373"/>
        <end position="377"/>
    </location>
</feature>
<feature type="turn" evidence="32">
    <location>
        <begin position="378"/>
        <end position="380"/>
    </location>
</feature>
<feature type="strand" evidence="30">
    <location>
        <begin position="382"/>
        <end position="384"/>
    </location>
</feature>
<feature type="turn" evidence="32">
    <location>
        <begin position="385"/>
        <end position="387"/>
    </location>
</feature>
<feature type="strand" evidence="30">
    <location>
        <begin position="389"/>
        <end position="391"/>
    </location>
</feature>
<reference key="1">
    <citation type="journal article" date="1989" name="Science">
        <title>Vascular endothelial growth factor is a secreted angiogenic mitogen.</title>
        <authorList>
            <person name="Leung D.W."/>
            <person name="Cachianes G."/>
            <person name="Kuang W.-J."/>
            <person name="Goeddel D.V."/>
            <person name="Ferrara N."/>
        </authorList>
    </citation>
    <scope>NUCLEOTIDE SEQUENCE [MRNA] (ISOFORMS VEGF189 AND VEGF165)</scope>
</reference>
<reference key="2">
    <citation type="journal article" date="1989" name="Science">
        <title>Vascular permeability factor, an endothelial cell mitogen related to PDGF.</title>
        <authorList>
            <person name="Keck P.J."/>
            <person name="Hauser S.D."/>
            <person name="Krivi G."/>
            <person name="Sanzo K."/>
            <person name="Warren T."/>
            <person name="Feder J."/>
            <person name="Connolly D.T."/>
        </authorList>
    </citation>
    <scope>NUCLEOTIDE SEQUENCE [MRNA] (ISOFORM VEGF189)</scope>
    <scope>PARTIAL PROTEIN SEQUENCE</scope>
</reference>
<reference key="3">
    <citation type="journal article" date="1991" name="J. Biol. Chem.">
        <title>The human gene for vascular endothelial growth factor. Multiple protein forms are encoded through alternative exon splicing.</title>
        <authorList>
            <person name="Tischer E."/>
            <person name="Mitchell R."/>
            <person name="Hartman T."/>
            <person name="Silva M."/>
            <person name="Gospodarowicz D."/>
            <person name="Fiddes J.C."/>
            <person name="Abraham J.A."/>
        </authorList>
    </citation>
    <scope>NUCLEOTIDE SEQUENCE [GENOMIC DNA] (ISOFORM VEGF189)</scope>
</reference>
<reference key="4">
    <citation type="journal article" date="1991" name="Mol. Endocrinol.">
        <title>The vascular endothelial growth factor family: identification of a fourth molecular species and characterization of alternative splicing of RNA.</title>
        <authorList>
            <person name="Houck K.A."/>
            <person name="Ferrara N."/>
            <person name="Winer J."/>
            <person name="Cachianes G."/>
            <person name="Li B."/>
            <person name="Leung D.W."/>
        </authorList>
    </citation>
    <scope>NUCLEOTIDE SEQUENCE [GENOMIC DNA / MRNA] (ISOFORM VEGF206)</scope>
</reference>
<reference key="5">
    <citation type="journal article" date="1992" name="Biochem. Biophys. Res. Commun.">
        <title>AIDS-associated Kaposi's sarcoma cells in culture express vascular endothelial growth factor.</title>
        <authorList>
            <person name="Weindel K."/>
            <person name="Marme D."/>
            <person name="Weich H.A."/>
        </authorList>
    </citation>
    <scope>NUCLEOTIDE SEQUENCE [MRNA] (ISOFORM VEGF165)</scope>
</reference>
<reference key="6">
    <citation type="journal article" date="1997" name="J. Biol. Chem.">
        <title>VEGF145, a secreted vascular endothelial growth factor isoform that binds to extracellular matrix.</title>
        <authorList>
            <person name="Poltorak Z."/>
            <person name="Cohen T."/>
            <person name="Sivan R."/>
            <person name="Kandelis Y."/>
            <person name="Spira G."/>
            <person name="Vlodavsky I."/>
            <person name="Keshet E."/>
            <person name="Neufeld G."/>
        </authorList>
    </citation>
    <scope>NUCLEOTIDE SEQUENCE [MRNA] (ISOFORM VEGF145)</scope>
</reference>
<reference key="7">
    <citation type="journal article" date="1998" name="Biochim. Biophys. Acta">
        <title>Identification and characterization of a new splicing variant of vascular endothelial growth factor: VEGF183.</title>
        <authorList>
            <person name="Lei J."/>
            <person name="Jiang A."/>
            <person name="Pei D."/>
        </authorList>
    </citation>
    <scope>NUCLEOTIDE SEQUENCE [MRNA] (ISOFORM VEGF183)</scope>
    <source>
        <tissue>Kidney</tissue>
    </source>
</reference>
<reference key="8">
    <citation type="journal article" date="1998" name="Mol. Biol. Cell">
        <title>Identification of a human VPF/VEGF 3' untranslated region mediating hypoxia-induced mRNA stability.</title>
        <authorList>
            <person name="Claffey K.P."/>
            <person name="Shih S.-C."/>
            <person name="Mullen A."/>
            <person name="Dziennis S."/>
            <person name="Cusick J.L."/>
            <person name="Abrams K.R."/>
            <person name="Lee S.W."/>
            <person name="Detmar M."/>
        </authorList>
    </citation>
    <scope>NUCLEOTIDE SEQUENCE [MRNA] (ISOFORM L-VEGF165)</scope>
    <source>
        <tissue>Mammary gland</tissue>
    </source>
</reference>
<reference key="9">
    <citation type="journal article" date="1999" name="Clin. Sci.">
        <title>Heterogeneous vascular endothelial growth factor (VEGF) isoform mRNA and receptor mRNA expression in human glomeruli, and the identification of VEGF148 mRNA, a novel truncated splice variant.</title>
        <authorList>
            <person name="Whittle C.J."/>
            <person name="Gillespie K.M."/>
            <person name="Harrison R."/>
            <person name="Mathieson P.W."/>
            <person name="Harper S.J."/>
        </authorList>
    </citation>
    <scope>NUCLEOTIDE SEQUENCE [MRNA] (ISOFORM VEGF148)</scope>
    <source>
        <tissue>Renal glomerulus</tissue>
    </source>
</reference>
<reference key="10">
    <citation type="journal article" date="2002" name="Cancer Res.">
        <title>VEGF165b, an inhibitory splice variant of vascular endothelial growth factor, is down-regulated in renal cell carcinoma.</title>
        <authorList>
            <person name="Bates D.O."/>
            <person name="Cui T.-G."/>
            <person name="Doughty J.M."/>
            <person name="Winkler M."/>
            <person name="Sugiono M."/>
            <person name="Shields J.D."/>
            <person name="Peat D."/>
            <person name="Gillatt D."/>
            <person name="Harper S.J."/>
        </authorList>
    </citation>
    <scope>NUCLEOTIDE SEQUENCE [MRNA] (ISOFORM VEGF165B)</scope>
    <source>
        <tissue>Kidney</tissue>
    </source>
</reference>
<reference key="11">
    <citation type="submission" date="1998-12" db="EMBL/GenBank/DDBJ databases">
        <title>Human cDNA for the vascular endothelial growth factor isoform VEGF165.</title>
        <authorList>
            <person name="Murata H."/>
            <person name="Fukushima J."/>
            <person name="Hattori S."/>
            <person name="Okuda K."/>
            <person name="Yanagi H."/>
        </authorList>
    </citation>
    <scope>NUCLEOTIDE SEQUENCE [MRNA] (ISOFORM VEGF165)</scope>
    <source>
        <tissue>Hemangioendothelioma</tissue>
    </source>
</reference>
<reference key="12">
    <citation type="submission" date="1999-12" db="EMBL/GenBank/DDBJ databases">
        <title>Human cDNA for vascular endothelial growth factor isoform VEGF121.</title>
        <authorList>
            <person name="Sato J.D."/>
            <person name="Whitney R.G."/>
        </authorList>
    </citation>
    <scope>NUCLEOTIDE SEQUENCE [MRNA] (ISOFORM VEGF121)</scope>
</reference>
<reference key="13">
    <citation type="submission" date="2001-07" db="EMBL/GenBank/DDBJ databases">
        <title>Cloning of vascular endothelial growth factor (VEGF) cDNA.</title>
        <authorList>
            <person name="Liu J."/>
            <person name="Peng X."/>
            <person name="Yuan J."/>
            <person name="Qiang B."/>
        </authorList>
    </citation>
    <scope>NUCLEOTIDE SEQUENCE [MRNA] (ISOFORM VEGF165)</scope>
</reference>
<reference key="14">
    <citation type="submission" date="2002-02" db="EMBL/GenBank/DDBJ databases">
        <title>Cloning and identification of vascular endothelial growth factor isoform VEGF165.</title>
        <authorList>
            <person name="Shan Z.X."/>
            <person name="Yu X.Y."/>
            <person name="Lin Q.X."/>
            <person name="Fu Y.H."/>
            <person name="Zheng M."/>
            <person name="Tan H.H."/>
            <person name="Lin S.G."/>
        </authorList>
    </citation>
    <scope>NUCLEOTIDE SEQUENCE [MRNA] (ISOFORM VEGF165)</scope>
    <source>
        <tissue>Heart</tissue>
    </source>
</reference>
<reference key="15">
    <citation type="submission" date="2004-09" db="EMBL/GenBank/DDBJ databases">
        <title>Cloning and characterization of VEGF from LNCaP cells, a line of prostate cancer cells.</title>
        <authorList>
            <person name="Koul S."/>
            <person name="Johnson T."/>
            <person name="Meacham R.B."/>
            <person name="Koul H.K."/>
        </authorList>
    </citation>
    <scope>NUCLEOTIDE SEQUENCE [MRNA] (ISOFORM VEGF165)</scope>
</reference>
<reference key="16">
    <citation type="submission" date="2005-10" db="EMBL/GenBank/DDBJ databases">
        <title>VEGF111, a new VEGF-A variant lacking exons 5, 6 and 7.</title>
        <authorList>
            <person name="Mineur P.J."/>
            <person name="Colige A.C."/>
            <person name="Lambert C.A."/>
        </authorList>
    </citation>
    <scope>NUCLEOTIDE SEQUENCE [MRNA] (ISOFORM VEGF111)</scope>
</reference>
<reference key="17">
    <citation type="journal article" date="2008" name="Nat. Methods">
        <title>Human protein factory for converting the transcriptome into an in vitro-expressed proteome.</title>
        <authorList>
            <person name="Goshima N."/>
            <person name="Kawamura Y."/>
            <person name="Fukumoto A."/>
            <person name="Miura A."/>
            <person name="Honma R."/>
            <person name="Satoh R."/>
            <person name="Wakamatsu A."/>
            <person name="Yamamoto J."/>
            <person name="Kimura K."/>
            <person name="Nishikawa T."/>
            <person name="Andoh T."/>
            <person name="Iida Y."/>
            <person name="Ishikawa K."/>
            <person name="Ito E."/>
            <person name="Kagawa N."/>
            <person name="Kaminaga C."/>
            <person name="Kanehori K."/>
            <person name="Kawakami B."/>
            <person name="Kenmochi K."/>
            <person name="Kimura R."/>
            <person name="Kobayashi M."/>
            <person name="Kuroita T."/>
            <person name="Kuwayama H."/>
            <person name="Maruyama Y."/>
            <person name="Matsuo K."/>
            <person name="Minami K."/>
            <person name="Mitsubori M."/>
            <person name="Mori M."/>
            <person name="Morishita R."/>
            <person name="Murase A."/>
            <person name="Nishikawa A."/>
            <person name="Nishikawa S."/>
            <person name="Okamoto T."/>
            <person name="Sakagami N."/>
            <person name="Sakamoto Y."/>
            <person name="Sasaki Y."/>
            <person name="Seki T."/>
            <person name="Sono S."/>
            <person name="Sugiyama A."/>
            <person name="Sumiya T."/>
            <person name="Takayama T."/>
            <person name="Takayama Y."/>
            <person name="Takeda H."/>
            <person name="Togashi T."/>
            <person name="Yahata K."/>
            <person name="Yamada H."/>
            <person name="Yanagisawa Y."/>
            <person name="Endo Y."/>
            <person name="Imamoto F."/>
            <person name="Kisu Y."/>
            <person name="Tanaka S."/>
            <person name="Isogai T."/>
            <person name="Imai J."/>
            <person name="Watanabe S."/>
            <person name="Nomura N."/>
        </authorList>
    </citation>
    <scope>NUCLEOTIDE SEQUENCE [LARGE SCALE MRNA] (ISOFORM VEGF165)</scope>
</reference>
<reference key="18">
    <citation type="journal article" date="2003" name="Nature">
        <title>The DNA sequence and analysis of human chromosome 6.</title>
        <authorList>
            <person name="Mungall A.J."/>
            <person name="Palmer S.A."/>
            <person name="Sims S.K."/>
            <person name="Edwards C.A."/>
            <person name="Ashurst J.L."/>
            <person name="Wilming L."/>
            <person name="Jones M.C."/>
            <person name="Horton R."/>
            <person name="Hunt S.E."/>
            <person name="Scott C.E."/>
            <person name="Gilbert J.G.R."/>
            <person name="Clamp M.E."/>
            <person name="Bethel G."/>
            <person name="Milne S."/>
            <person name="Ainscough R."/>
            <person name="Almeida J.P."/>
            <person name="Ambrose K.D."/>
            <person name="Andrews T.D."/>
            <person name="Ashwell R.I.S."/>
            <person name="Babbage A.K."/>
            <person name="Bagguley C.L."/>
            <person name="Bailey J."/>
            <person name="Banerjee R."/>
            <person name="Barker D.J."/>
            <person name="Barlow K.F."/>
            <person name="Bates K."/>
            <person name="Beare D.M."/>
            <person name="Beasley H."/>
            <person name="Beasley O."/>
            <person name="Bird C.P."/>
            <person name="Blakey S.E."/>
            <person name="Bray-Allen S."/>
            <person name="Brook J."/>
            <person name="Brown A.J."/>
            <person name="Brown J.Y."/>
            <person name="Burford D.C."/>
            <person name="Burrill W."/>
            <person name="Burton J."/>
            <person name="Carder C."/>
            <person name="Carter N.P."/>
            <person name="Chapman J.C."/>
            <person name="Clark S.Y."/>
            <person name="Clark G."/>
            <person name="Clee C.M."/>
            <person name="Clegg S."/>
            <person name="Cobley V."/>
            <person name="Collier R.E."/>
            <person name="Collins J.E."/>
            <person name="Colman L.K."/>
            <person name="Corby N.R."/>
            <person name="Coville G.J."/>
            <person name="Culley K.M."/>
            <person name="Dhami P."/>
            <person name="Davies J."/>
            <person name="Dunn M."/>
            <person name="Earthrowl M.E."/>
            <person name="Ellington A.E."/>
            <person name="Evans K.A."/>
            <person name="Faulkner L."/>
            <person name="Francis M.D."/>
            <person name="Frankish A."/>
            <person name="Frankland J."/>
            <person name="French L."/>
            <person name="Garner P."/>
            <person name="Garnett J."/>
            <person name="Ghori M.J."/>
            <person name="Gilby L.M."/>
            <person name="Gillson C.J."/>
            <person name="Glithero R.J."/>
            <person name="Grafham D.V."/>
            <person name="Grant M."/>
            <person name="Gribble S."/>
            <person name="Griffiths C."/>
            <person name="Griffiths M.N.D."/>
            <person name="Hall R."/>
            <person name="Halls K.S."/>
            <person name="Hammond S."/>
            <person name="Harley J.L."/>
            <person name="Hart E.A."/>
            <person name="Heath P.D."/>
            <person name="Heathcott R."/>
            <person name="Holmes S.J."/>
            <person name="Howden P.J."/>
            <person name="Howe K.L."/>
            <person name="Howell G.R."/>
            <person name="Huckle E."/>
            <person name="Humphray S.J."/>
            <person name="Humphries M.D."/>
            <person name="Hunt A.R."/>
            <person name="Johnson C.M."/>
            <person name="Joy A.A."/>
            <person name="Kay M."/>
            <person name="Keenan S.J."/>
            <person name="Kimberley A.M."/>
            <person name="King A."/>
            <person name="Laird G.K."/>
            <person name="Langford C."/>
            <person name="Lawlor S."/>
            <person name="Leongamornlert D.A."/>
            <person name="Leversha M."/>
            <person name="Lloyd C.R."/>
            <person name="Lloyd D.M."/>
            <person name="Loveland J.E."/>
            <person name="Lovell J."/>
            <person name="Martin S."/>
            <person name="Mashreghi-Mohammadi M."/>
            <person name="Maslen G.L."/>
            <person name="Matthews L."/>
            <person name="McCann O.T."/>
            <person name="McLaren S.J."/>
            <person name="McLay K."/>
            <person name="McMurray A."/>
            <person name="Moore M.J.F."/>
            <person name="Mullikin J.C."/>
            <person name="Niblett D."/>
            <person name="Nickerson T."/>
            <person name="Novik K.L."/>
            <person name="Oliver K."/>
            <person name="Overton-Larty E.K."/>
            <person name="Parker A."/>
            <person name="Patel R."/>
            <person name="Pearce A.V."/>
            <person name="Peck A.I."/>
            <person name="Phillimore B.J.C.T."/>
            <person name="Phillips S."/>
            <person name="Plumb R.W."/>
            <person name="Porter K.M."/>
            <person name="Ramsey Y."/>
            <person name="Ranby S.A."/>
            <person name="Rice C.M."/>
            <person name="Ross M.T."/>
            <person name="Searle S.M."/>
            <person name="Sehra H.K."/>
            <person name="Sheridan E."/>
            <person name="Skuce C.D."/>
            <person name="Smith S."/>
            <person name="Smith M."/>
            <person name="Spraggon L."/>
            <person name="Squares S.L."/>
            <person name="Steward C.A."/>
            <person name="Sycamore N."/>
            <person name="Tamlyn-Hall G."/>
            <person name="Tester J."/>
            <person name="Theaker A.J."/>
            <person name="Thomas D.W."/>
            <person name="Thorpe A."/>
            <person name="Tracey A."/>
            <person name="Tromans A."/>
            <person name="Tubby B."/>
            <person name="Wall M."/>
            <person name="Wallis J.M."/>
            <person name="West A.P."/>
            <person name="White S.S."/>
            <person name="Whitehead S.L."/>
            <person name="Whittaker H."/>
            <person name="Wild A."/>
            <person name="Willey D.J."/>
            <person name="Wilmer T.E."/>
            <person name="Wood J.M."/>
            <person name="Wray P.W."/>
            <person name="Wyatt J.C."/>
            <person name="Young L."/>
            <person name="Younger R.M."/>
            <person name="Bentley D.R."/>
            <person name="Coulson A."/>
            <person name="Durbin R.M."/>
            <person name="Hubbard T."/>
            <person name="Sulston J.E."/>
            <person name="Dunham I."/>
            <person name="Rogers J."/>
            <person name="Beck S."/>
        </authorList>
    </citation>
    <scope>NUCLEOTIDE SEQUENCE [LARGE SCALE GENOMIC DNA]</scope>
</reference>
<reference key="19">
    <citation type="submission" date="2005-07" db="EMBL/GenBank/DDBJ databases">
        <authorList>
            <person name="Mural R.J."/>
            <person name="Istrail S."/>
            <person name="Sutton G.G."/>
            <person name="Florea L."/>
            <person name="Halpern A.L."/>
            <person name="Mobarry C.M."/>
            <person name="Lippert R."/>
            <person name="Walenz B."/>
            <person name="Shatkay H."/>
            <person name="Dew I."/>
            <person name="Miller J.R."/>
            <person name="Flanigan M.J."/>
            <person name="Edwards N.J."/>
            <person name="Bolanos R."/>
            <person name="Fasulo D."/>
            <person name="Halldorsson B.V."/>
            <person name="Hannenhalli S."/>
            <person name="Turner R."/>
            <person name="Yooseph S."/>
            <person name="Lu F."/>
            <person name="Nusskern D.R."/>
            <person name="Shue B.C."/>
            <person name="Zheng X.H."/>
            <person name="Zhong F."/>
            <person name="Delcher A.L."/>
            <person name="Huson D.H."/>
            <person name="Kravitz S.A."/>
            <person name="Mouchard L."/>
            <person name="Reinert K."/>
            <person name="Remington K.A."/>
            <person name="Clark A.G."/>
            <person name="Waterman M.S."/>
            <person name="Eichler E.E."/>
            <person name="Adams M.D."/>
            <person name="Hunkapiller M.W."/>
            <person name="Myers E.W."/>
            <person name="Venter J.C."/>
        </authorList>
    </citation>
    <scope>NUCLEOTIDE SEQUENCE [LARGE SCALE GENOMIC DNA]</scope>
</reference>
<reference key="20">
    <citation type="journal article" date="2004" name="Genome Res.">
        <title>The status, quality, and expansion of the NIH full-length cDNA project: the Mammalian Gene Collection (MGC).</title>
        <authorList>
            <consortium name="The MGC Project Team"/>
        </authorList>
    </citation>
    <scope>PARTIAL NUCLEOTIDE SEQUENCE [LARGE SCALE MRNA] (ISOFORM L-VEGF121)</scope>
    <source>
        <tissue>Lung</tissue>
    </source>
</reference>
<reference key="21">
    <citation type="submission" date="2001-10" db="EMBL/GenBank/DDBJ databases">
        <authorList>
            <consortium name="SeattleSNPs variation discovery resource"/>
        </authorList>
    </citation>
    <scope>NUCLEOTIDE SEQUENCE [GENOMIC DNA] OF 203-395</scope>
</reference>
<reference key="22">
    <citation type="journal article" date="1993" name="Eur. J. Biochem.">
        <title>Synthesis and assembly of functionally active human vascular endothelial growth factor homodimers in insect cells.</title>
        <authorList>
            <person name="Fiebich B.L."/>
            <person name="Jaeger B."/>
            <person name="Schoellmann C."/>
            <person name="Weindel K."/>
            <person name="Wilting J."/>
            <person name="Kochs G."/>
            <person name="Marme D."/>
            <person name="Hug H."/>
            <person name="Weich H.A."/>
        </authorList>
    </citation>
    <scope>PROTEIN SEQUENCE OF 207-221</scope>
</reference>
<reference key="23">
    <citation type="journal article" date="2004" name="Protein Sci.">
        <title>Signal peptide prediction based on analysis of experimentally verified cleavage sites.</title>
        <authorList>
            <person name="Zhang Z."/>
            <person name="Henzel W.J."/>
        </authorList>
    </citation>
    <scope>PROTEIN SEQUENCE OF 207-221</scope>
</reference>
<reference key="24">
    <citation type="journal article" date="1989" name="J. Biol. Chem.">
        <title>Human vascular permeability factor. Isolation from U937 cells.</title>
        <authorList>
            <person name="Connolly D.T."/>
            <person name="Olander J.V."/>
            <person name="Heuvelman D."/>
            <person name="Nelson R."/>
            <person name="Monsell R."/>
            <person name="Siegel N."/>
            <person name="Haymore B.L."/>
            <person name="Leimgruber R."/>
            <person name="Feder J."/>
        </authorList>
    </citation>
    <scope>PRELIMINARY PROTEIN SEQUENCE OF 207-216; 223-230 AND 239-261</scope>
</reference>
<reference key="25">
    <citation type="journal article" date="1999" name="Invest. Ophthalmol. Vis. Sci.">
        <title>Human Muller cells express VEGF183, a novel spliced variant of vascular endothelial growth factor.</title>
        <authorList>
            <person name="Jingjing L."/>
            <person name="Xue Y."/>
            <person name="Agarwal N."/>
            <person name="Roque R.S."/>
        </authorList>
    </citation>
    <scope>NUCLEOTIDE SEQUENCE [MRNA] OF 294-372 (ISOFORM VEGF183)</scope>
    <source>
        <tissue>Retina</tissue>
    </source>
</reference>
<reference key="26">
    <citation type="journal article" date="2001" name="Biochem. J.">
        <title>A precursor form of vascular endothelial growth factor arises by initiation from an upstream in-frame CUG codon.</title>
        <authorList>
            <person name="Tee M.K."/>
            <person name="Jaffe R.B."/>
        </authorList>
    </citation>
    <scope>ALTERNATIVE SPLICING (ISOFORMS L-VEGF121 AND L-VEGF165)</scope>
    <scope>PROCESSING</scope>
    <scope>SUBCELLULAR LOCATION</scope>
</reference>
<reference key="27">
    <citation type="journal article" date="2001" name="FASEB J.">
        <title>Vascular endothelial growth factor induces cyclooxygenase-dependent proliferation of endothelial cells via the VEGF-2 receptor.</title>
        <authorList>
            <person name="Murphy J.F."/>
            <person name="Fitzgerald D.J."/>
        </authorList>
    </citation>
    <scope>FUNCTION</scope>
</reference>
<reference key="28">
    <citation type="journal article" date="2001" name="Mol. Endocrinol.">
        <title>New vascular endothelial growth factor isoform generated by internal ribosome entry site-driven CUG translation initiation.</title>
        <authorList>
            <person name="Huez I."/>
            <person name="Bornes S."/>
            <person name="Bresson D."/>
            <person name="Creancier L."/>
            <person name="Prats H."/>
        </authorList>
    </citation>
    <scope>ALTERNATIVE SPLICING (ISOFORM L-VEGF189)</scope>
    <scope>PROCESSING</scope>
    <scope>SUBCELLULAR LOCATION</scope>
</reference>
<reference key="29">
    <citation type="journal article" date="2002" name="Diabetes">
        <title>A common polymorphism in the 5'-untranslated region of the VEGF gene is associated with diabetic retinopathy in type 2 diabetes.</title>
        <authorList>
            <person name="Awata T."/>
            <person name="Inoue K."/>
            <person name="Kurihara S."/>
            <person name="Ohkubo T."/>
            <person name="Watanabe M."/>
            <person name="Inukai K."/>
            <person name="Inoue I."/>
            <person name="Katayama S."/>
        </authorList>
    </citation>
    <scope>INVOLVEMENT IN MVCD1</scope>
</reference>
<reference key="30">
    <citation type="journal article" date="2004" name="Cancer Res.">
        <title>VEGF165b, an inhibitory vascular endothelial growth factor splice variant: mechanism of action, in vivo effect on angiogenesis and endogenous protein expression.</title>
        <authorList>
            <person name="Woolard J."/>
            <person name="Wang W.-Y."/>
            <person name="Bevan H.S."/>
            <person name="Qiu Y."/>
            <person name="Morbidelli L."/>
            <person name="Pritchard-Jones R.O."/>
            <person name="Cui T.-G."/>
            <person name="Sugiono M."/>
            <person name="Waine E."/>
            <person name="Perrin R."/>
            <person name="Foster R."/>
            <person name="Digby-Bell J."/>
            <person name="Shields J.D."/>
            <person name="Whittles C.E."/>
            <person name="Mushens R.E."/>
            <person name="Gillatt D.A."/>
            <person name="Ziche M."/>
            <person name="Harper S.J."/>
            <person name="Bates D.O."/>
        </authorList>
    </citation>
    <scope>FUNCTION (ISOFORM VEGF165B)</scope>
</reference>
<reference key="31">
    <citation type="journal article" date="2004" name="J. Biol. Chem.">
        <title>Control of the vascular endothelial growth factor internal ribosome entry site (IRES) activity and translation initiation by alternatively spliced coding sequences.</title>
        <authorList>
            <person name="Bornes S."/>
            <person name="Boulard M."/>
            <person name="Hieblot C."/>
            <person name="Zanibellato C."/>
            <person name="Iacovoni J.S."/>
            <person name="Prats H."/>
            <person name="Touriol C."/>
        </authorList>
    </citation>
    <scope>ALTERNATIVE SPLICING (ISOFORMS L-VEGF121; L-VEGF165 AND L-VEGF189)</scope>
</reference>
<reference key="32">
    <citation type="journal article" date="2005" name="Biochem. Biophys. Res. Commun.">
        <title>Nuclear localization of long-VEGF is associated with hypoxia and tumor angiogenesis.</title>
        <authorList>
            <person name="Rosenbaum-Dekel Y."/>
            <person name="Fuchs A."/>
            <person name="Yakirevich E."/>
            <person name="Azriel A."/>
            <person name="Mazareb S."/>
            <person name="Resnick M.B."/>
            <person name="Levi B.Z."/>
        </authorList>
    </citation>
    <scope>ALTERNATIVE SPLICING (ISOFORMS L-VEGF121 AND L-VEGF165)</scope>
    <scope>PROCESSING</scope>
    <scope>SUBCELLULAR LOCATION</scope>
</reference>
<reference key="33">
    <citation type="journal article" date="2006" name="Cancer Res.">
        <title>Minimal active domain and mechanism of action of the angiogenesis inhibitor histidine-rich glycoprotein.</title>
        <authorList>
            <person name="Dixelius J."/>
            <person name="Olsson A.K."/>
            <person name="Thulin A."/>
            <person name="Lee C."/>
            <person name="Johansson I."/>
            <person name="Claesson-Welsh L."/>
        </authorList>
    </citation>
    <scope>FUNCTION IN CELL MIGRATION</scope>
</reference>
<reference key="34">
    <citation type="journal article" date="2007" name="Circ. Res.">
        <title>Association of ATP1A1 and dear single-nucleotide polymorphism haplotypes with essential hypertension: sex-specific and haplotype-specific effects.</title>
        <authorList>
            <person name="Glorioso N."/>
            <person name="Herrera V.L."/>
            <person name="Bagamasbad P."/>
            <person name="Filigheddu F."/>
            <person name="Troffa C."/>
            <person name="Argiolas G."/>
            <person name="Bulla E."/>
            <person name="Decano J.L."/>
            <person name="Ruiz-Opazo N."/>
        </authorList>
    </citation>
    <scope>FUNCTION</scope>
</reference>
<reference key="35">
    <citation type="journal article" date="2012" name="Endocr. Relat. Cancer">
        <title>RSUME is implicated in HIF-1-induced VEGF-A production in pituitary tumour cells.</title>
        <authorList>
            <person name="Shan B."/>
            <person name="Gerez J."/>
            <person name="Haedo M."/>
            <person name="Fuertes M."/>
            <person name="Theodoropoulou M."/>
            <person name="Buchfelder M."/>
            <person name="Losa M."/>
            <person name="Stalla G.K."/>
            <person name="Arzt E."/>
            <person name="Renner U."/>
        </authorList>
    </citation>
    <scope>TISSUE SPECIFICITY</scope>
    <scope>INDUCTION</scope>
</reference>
<reference key="36">
    <citation type="journal article" date="2015" name="Nature">
        <title>CMT2D neuropathy is linked to the neomorphic binding activity of glycyl-tRNA synthetase.</title>
        <authorList>
            <person name="He W."/>
            <person name="Bai G."/>
            <person name="Zhou H."/>
            <person name="Wei N."/>
            <person name="White N.M."/>
            <person name="Lauer J."/>
            <person name="Liu H."/>
            <person name="Shi Y."/>
            <person name="Dumitru C.D."/>
            <person name="Lettieri K."/>
            <person name="Shubayev V."/>
            <person name="Jordanova A."/>
            <person name="Guergueltcheva V."/>
            <person name="Griffin P.R."/>
            <person name="Burgess R.W."/>
            <person name="Pfaff S.L."/>
            <person name="Yang X.L."/>
        </authorList>
    </citation>
    <scope>INTERACTION WITH NRP1</scope>
</reference>
<reference key="37">
    <citation type="journal article" date="2016" name="Nature">
        <title>Corrigendum: CMT2D neuropathy is linked to the neomorphic binding activity of glycyl-tRNA synthetase.</title>
        <authorList>
            <person name="He W."/>
            <person name="Bai G."/>
            <person name="Zhou H."/>
            <person name="Wei N."/>
            <person name="White N.M."/>
            <person name="Lauer J."/>
            <person name="Liu H."/>
            <person name="Shi Y."/>
            <person name="Dan Dumitru C."/>
            <person name="Lettieri K."/>
            <person name="Shubayev V."/>
            <person name="Jordanova A."/>
            <person name="Guergueltcheva V."/>
            <person name="Griffin P.R."/>
            <person name="Burgess R.W."/>
            <person name="Pfaff S.L."/>
            <person name="Yang X.L."/>
        </authorList>
    </citation>
    <scope>ERRATUM OF PUBMED:26503042</scope>
</reference>
<reference key="38">
    <citation type="journal article" date="2015" name="Oncotarget">
        <title>EMMPRIN/CD147 is a novel coreceptor of VEGFR-2 mediating its activation by VEGF.</title>
        <authorList>
            <person name="Khayati F."/>
            <person name="Perez-Cano L."/>
            <person name="Maouche K."/>
            <person name="Sadoux A."/>
            <person name="Boutalbi Z."/>
            <person name="Podgorniak M.P."/>
            <person name="Maskos U."/>
            <person name="Setterblad N."/>
            <person name="Janin A."/>
            <person name="Calvo F."/>
            <person name="Lebbe C."/>
            <person name="Menashi S."/>
            <person name="Fernandez-Recio J."/>
            <person name="Mourah S."/>
        </authorList>
    </citation>
    <scope>FUNCTION</scope>
    <scope>INTERACTION WITH BSG</scope>
</reference>
<reference key="39">
    <citation type="journal article" date="2021" name="J. Hematol. Oncol.">
        <title>KAI1(CD82) is a key molecule to control angiogenesis and switch angiogenic milieu to quiescent state.</title>
        <authorList>
            <person name="Lee J.W."/>
            <person name="Hur J."/>
            <person name="Kwon Y.W."/>
            <person name="Chae C.W."/>
            <person name="Choi J.I."/>
            <person name="Hwang I."/>
            <person name="Yun J.Y."/>
            <person name="Kang J.A."/>
            <person name="Choi Y.E."/>
            <person name="Kim Y.H."/>
            <person name="Lee S.E."/>
            <person name="Lee C."/>
            <person name="Jo D.H."/>
            <person name="Seok H."/>
            <person name="Cho B.S."/>
            <person name="Baek S.H."/>
            <person name="Kim H.S."/>
        </authorList>
    </citation>
    <scope>FUNCTION</scope>
    <scope>INTERACTION WITH CD82</scope>
</reference>
<reference key="40">
    <citation type="journal article" date="2022" name="Cells">
        <title>N-VEGF, the Autoregulatory Arm of VEGF-A.</title>
        <authorList>
            <person name="Katsman M."/>
            <person name="Azriel A."/>
            <person name="Horev G."/>
            <person name="Reizel Y."/>
            <person name="Levi B.Z."/>
        </authorList>
    </citation>
    <scope>FUNCTION (N-VEGF)</scope>
    <scope>SUBCELLULAR LOCATION (N-VEGF)</scope>
</reference>
<reference key="41">
    <citation type="journal article" date="1997" name="Proc. Natl. Acad. Sci. U.S.A.">
        <title>Vascular endothelial growth factor: crystal structure and functional mapping of the kinase domain receptor binding site.</title>
        <authorList>
            <person name="Muller Y.A."/>
            <person name="Li B."/>
            <person name="Christinger H.W."/>
            <person name="Wells J.A."/>
            <person name="Cunningham B.C."/>
            <person name="de Vos A.M."/>
        </authorList>
    </citation>
    <scope>X-RAY CRYSTALLOGRAPHY (2.5 ANGSTROMS) OF 214-315</scope>
</reference>
<reference key="42">
    <citation type="journal article" date="1997" name="Protein Sci.">
        <title>1H, 13C, and 15N backbone assignment and secondary structure of the receptor-binding domain of vascular endothelial growth factor.</title>
        <authorList>
            <person name="Fairbrother W.J."/>
            <person name="Champe M.A."/>
            <person name="Christinger H.W."/>
            <person name="Keyt B.A."/>
            <person name="Starovasnik M.A."/>
        </authorList>
    </citation>
    <scope>STRUCTURE BY NMR OF 214-315</scope>
</reference>
<reference key="43">
    <citation type="journal article" date="1997" name="Structure">
        <title>The crystal structure of vascular endothelial growth factor (VEGF) refined to 1.93-A resolution: multiple copy flexibility and receptor binding.</title>
        <authorList>
            <person name="Muller Y.A."/>
            <person name="Christinger H.W."/>
            <person name="Keyt B.A."/>
            <person name="de Vos A.M."/>
        </authorList>
    </citation>
    <scope>X-RAY CRYSTALLOGRAPHY (1.93 ANGSTROMS) OF 214-315</scope>
</reference>
<reference key="44">
    <citation type="journal article" date="1998" name="Biochemistry">
        <title>Crystal structure of the complex between VEGF and a receptor-blocking peptide.</title>
        <authorList>
            <person name="Wiesmann C."/>
            <person name="Christinger H.W."/>
            <person name="Cochran A.G."/>
            <person name="Cunningham B.C."/>
            <person name="Fairbrother W.J."/>
            <person name="Keenan C.J."/>
            <person name="Meng G."/>
            <person name="de Vos A.M."/>
        </authorList>
    </citation>
    <scope>X-RAY CRYSTALLOGRAPHY (1.9 ANGSTROMS) OF 219-314</scope>
</reference>
<reference key="45">
    <citation type="journal article" date="1998" name="Structure">
        <title>Solution structure of the heparin-binding domain of vascular endothelial growth factor.</title>
        <authorList>
            <person name="Fairbrother W.J."/>
            <person name="Champe M.A."/>
            <person name="Christinger H.W."/>
            <person name="Keyt B.A."/>
            <person name="Starovasnik M.A."/>
        </authorList>
    </citation>
    <scope>STRUCTURE BY NMR OF 317-378</scope>
</reference>
<proteinExistence type="evidence at protein level"/>
<sequence length="395" mass="43597">MTDRQTDTAPSPSYHLLPGRRRTVDAAASRGQGPEPAPGGGVEGVGARGVALKLFVQLLGCSRFGGAVVRAGEAEPSGAARSASSGREEPQPEEGEEEEEKEEERGPQWRLGARKPGSWTGEAAVCADSAPAARAPQALARASGRGGRVARRGAEESGPPHSPSRRGSASRAGPGRASETMNFLLSWVHWSLALLLYLHHAKWSQAAPMAEGGGQNHHEVVKFMDVYQRSYCHPIETLVDIFQEYPDEIEYIFKPSCVPLMRCGGCCNDEGLECVPTEESNITMQIMRIKPHQGQHIGEMSFLQHNKCECRPKKDRARQEKKSVRGKGKGQKRKRKKSRYKSWSVPCGPCSERRKHLFVQDPQTCKCSCKNTDSRCKARQLELNERTCRCDKPRR</sequence>
<gene>
    <name type="primary">VEGFA</name>
    <name type="synonym">VEGF</name>
</gene>
<name>VEGFA_HUMAN</name>
<dbReference type="EMBL" id="M32977">
    <property type="protein sequence ID" value="AAA35789.1"/>
    <property type="molecule type" value="mRNA"/>
</dbReference>
<dbReference type="EMBL" id="M27281">
    <property type="protein sequence ID" value="AAA36807.1"/>
    <property type="molecule type" value="mRNA"/>
</dbReference>
<dbReference type="EMBL" id="M63978">
    <property type="protein sequence ID" value="AAA36804.1"/>
    <property type="molecule type" value="Genomic_DNA"/>
</dbReference>
<dbReference type="EMBL" id="M63971">
    <property type="protein sequence ID" value="AAA36804.1"/>
    <property type="status" value="JOINED"/>
    <property type="molecule type" value="Genomic_DNA"/>
</dbReference>
<dbReference type="EMBL" id="M63972">
    <property type="protein sequence ID" value="AAA36804.1"/>
    <property type="status" value="JOINED"/>
    <property type="molecule type" value="Genomic_DNA"/>
</dbReference>
<dbReference type="EMBL" id="M63973">
    <property type="protein sequence ID" value="AAA36804.1"/>
    <property type="status" value="JOINED"/>
    <property type="molecule type" value="Genomic_DNA"/>
</dbReference>
<dbReference type="EMBL" id="M63974">
    <property type="protein sequence ID" value="AAA36804.1"/>
    <property type="status" value="JOINED"/>
    <property type="molecule type" value="Genomic_DNA"/>
</dbReference>
<dbReference type="EMBL" id="M63975">
    <property type="protein sequence ID" value="AAA36804.1"/>
    <property type="status" value="JOINED"/>
    <property type="molecule type" value="Genomic_DNA"/>
</dbReference>
<dbReference type="EMBL" id="M63976">
    <property type="protein sequence ID" value="AAA36804.1"/>
    <property type="status" value="JOINED"/>
    <property type="molecule type" value="Genomic_DNA"/>
</dbReference>
<dbReference type="EMBL" id="M63977">
    <property type="protein sequence ID" value="AAA36804.1"/>
    <property type="status" value="JOINED"/>
    <property type="molecule type" value="Genomic_DNA"/>
</dbReference>
<dbReference type="EMBL" id="S85192">
    <property type="protein sequence ID" value="AAC63102.1"/>
    <property type="status" value="ALT_INIT"/>
    <property type="molecule type" value="mRNA"/>
</dbReference>
<dbReference type="EMBL" id="AH006909">
    <property type="protein sequence ID" value="AAC63101.1"/>
    <property type="molecule type" value="Genomic_DNA"/>
</dbReference>
<dbReference type="EMBL" id="X62568">
    <property type="protein sequence ID" value="CAA44447.1"/>
    <property type="molecule type" value="mRNA"/>
</dbReference>
<dbReference type="EMBL" id="AJ010438">
    <property type="protein sequence ID" value="CAA09179.1"/>
    <property type="molecule type" value="mRNA"/>
</dbReference>
<dbReference type="EMBL" id="AF022375">
    <property type="protein sequence ID" value="AAC63143.1"/>
    <property type="status" value="ALT_SEQ"/>
    <property type="molecule type" value="mRNA"/>
</dbReference>
<dbReference type="EMBL" id="AF091352">
    <property type="protein sequence ID" value="AAD55345.1"/>
    <property type="molecule type" value="mRNA"/>
</dbReference>
<dbReference type="EMBL" id="AF430806">
    <property type="protein sequence ID" value="AAL27435.1"/>
    <property type="molecule type" value="mRNA"/>
</dbReference>
<dbReference type="EMBL" id="AB021221">
    <property type="protein sequence ID" value="BAA78418.1"/>
    <property type="molecule type" value="mRNA"/>
</dbReference>
<dbReference type="EMBL" id="AF214570">
    <property type="protein sequence ID" value="AAF19659.1"/>
    <property type="molecule type" value="mRNA"/>
</dbReference>
<dbReference type="EMBL" id="AY047581">
    <property type="protein sequence ID" value="AAK95847.1"/>
    <property type="molecule type" value="mRNA"/>
</dbReference>
<dbReference type="EMBL" id="AF486837">
    <property type="protein sequence ID" value="AAM03108.1"/>
    <property type="molecule type" value="mRNA"/>
</dbReference>
<dbReference type="EMBL" id="AY766116">
    <property type="protein sequence ID" value="AAV34601.1"/>
    <property type="molecule type" value="mRNA"/>
</dbReference>
<dbReference type="EMBL" id="DQ229900">
    <property type="protein sequence ID" value="ABB58912.1"/>
    <property type="molecule type" value="mRNA"/>
</dbReference>
<dbReference type="EMBL" id="AB451322">
    <property type="protein sequence ID" value="BAG70136.1"/>
    <property type="molecule type" value="mRNA"/>
</dbReference>
<dbReference type="EMBL" id="AB451451">
    <property type="protein sequence ID" value="BAG70265.1"/>
    <property type="molecule type" value="mRNA"/>
</dbReference>
<dbReference type="EMBL" id="AL136131">
    <property type="status" value="NOT_ANNOTATED_CDS"/>
    <property type="molecule type" value="Genomic_DNA"/>
</dbReference>
<dbReference type="EMBL" id="CH471081">
    <property type="protein sequence ID" value="EAX04229.1"/>
    <property type="molecule type" value="Genomic_DNA"/>
</dbReference>
<dbReference type="EMBL" id="BC065522">
    <property type="protein sequence ID" value="AAH65522.2"/>
    <property type="molecule type" value="mRNA"/>
</dbReference>
<dbReference type="EMBL" id="AF437895">
    <property type="protein sequence ID" value="AAL27630.1"/>
    <property type="molecule type" value="Genomic_DNA"/>
</dbReference>
<dbReference type="EMBL" id="AF062645">
    <property type="protein sequence ID" value="AAC16730.1"/>
    <property type="molecule type" value="mRNA"/>
</dbReference>
<dbReference type="CCDS" id="CCDS34457.1">
    <molecule id="P15692-14"/>
</dbReference>
<dbReference type="CCDS" id="CCDS34458.1">
    <molecule id="P15692-11"/>
</dbReference>
<dbReference type="CCDS" id="CCDS47432.1">
    <molecule id="P15692-15"/>
</dbReference>
<dbReference type="CCDS" id="CCDS47433.1">
    <molecule id="P15692-16"/>
</dbReference>
<dbReference type="CCDS" id="CCDS47434.1">
    <molecule id="P15692-12"/>
</dbReference>
<dbReference type="CCDS" id="CCDS47435.1">
    <molecule id="P15692-17"/>
</dbReference>
<dbReference type="CCDS" id="CCDS4907.2">
    <molecule id="P15692-13"/>
</dbReference>
<dbReference type="CCDS" id="CCDS55007.1">
    <molecule id="P15692-18"/>
</dbReference>
<dbReference type="CCDS" id="CCDS55008.1">
    <molecule id="P15692-3"/>
</dbReference>
<dbReference type="CCDS" id="CCDS55009.1">
    <molecule id="P15692-2"/>
</dbReference>
<dbReference type="CCDS" id="CCDS55010.1">
    <molecule id="P15692-1"/>
</dbReference>
<dbReference type="CCDS" id="CCDS55011.1">
    <molecule id="P15692-5"/>
</dbReference>
<dbReference type="CCDS" id="CCDS55012.1">
    <molecule id="P15692-4"/>
</dbReference>
<dbReference type="CCDS" id="CCDS55013.1">
    <molecule id="P15692-8"/>
</dbReference>
<dbReference type="CCDS" id="CCDS55014.1">
    <molecule id="P15692-9"/>
</dbReference>
<dbReference type="CCDS" id="CCDS55015.1">
    <molecule id="P15692-10"/>
</dbReference>
<dbReference type="PIR" id="A41551">
    <property type="entry name" value="A41551"/>
</dbReference>
<dbReference type="RefSeq" id="NP_001020537.2">
    <molecule id="P15692-14"/>
    <property type="nucleotide sequence ID" value="NM_001025366.3"/>
</dbReference>
<dbReference type="RefSeq" id="NP_001020538.2">
    <molecule id="P15692-16"/>
    <property type="nucleotide sequence ID" value="NM_001025367.3"/>
</dbReference>
<dbReference type="RefSeq" id="NP_001020539.2">
    <molecule id="P15692-11"/>
    <property type="nucleotide sequence ID" value="NM_001025368.3"/>
</dbReference>
<dbReference type="RefSeq" id="NP_001020540.2">
    <molecule id="P15692-17"/>
    <property type="nucleotide sequence ID" value="NM_001025369.3"/>
</dbReference>
<dbReference type="RefSeq" id="NP_001020541.2">
    <molecule id="P15692-12"/>
    <property type="nucleotide sequence ID" value="NM_001025370.3"/>
</dbReference>
<dbReference type="RefSeq" id="NP_001028928.1">
    <molecule id="P15692-15"/>
    <property type="nucleotide sequence ID" value="NM_001033756.3"/>
</dbReference>
<dbReference type="RefSeq" id="NP_001165093.1">
    <molecule id="P15692-18"/>
    <property type="nucleotide sequence ID" value="NM_001171622.2"/>
</dbReference>
<dbReference type="RefSeq" id="NP_001165094.1">
    <molecule id="P15692-1"/>
    <property type="nucleotide sequence ID" value="NM_001171623.2"/>
</dbReference>
<dbReference type="RefSeq" id="NP_001165095.1">
    <molecule id="P15692-2"/>
    <property type="nucleotide sequence ID" value="NM_001171624.2"/>
</dbReference>
<dbReference type="RefSeq" id="NP_001165096.1">
    <molecule id="P15692-3"/>
    <property type="nucleotide sequence ID" value="NM_001171625.2"/>
</dbReference>
<dbReference type="RefSeq" id="NP_001165097.1">
    <molecule id="P15692-4"/>
    <property type="nucleotide sequence ID" value="NM_001171626.2"/>
</dbReference>
<dbReference type="RefSeq" id="NP_001165098.1">
    <molecule id="P15692-5"/>
    <property type="nucleotide sequence ID" value="NM_001171627.2"/>
</dbReference>
<dbReference type="RefSeq" id="NP_001165099.1">
    <molecule id="P15692-9"/>
    <property type="nucleotide sequence ID" value="NM_001171628.2"/>
</dbReference>
<dbReference type="RefSeq" id="NP_001165100.1">
    <molecule id="P15692-8"/>
    <property type="nucleotide sequence ID" value="NM_001171629.2"/>
</dbReference>
<dbReference type="RefSeq" id="NP_001165101.1">
    <molecule id="P15692-10"/>
    <property type="nucleotide sequence ID" value="NM_001171630.2"/>
</dbReference>
<dbReference type="RefSeq" id="NP_001191313.1">
    <molecule id="P15692-6"/>
    <property type="nucleotide sequence ID" value="NM_001204384.2"/>
</dbReference>
<dbReference type="RefSeq" id="NP_001191314.1">
    <property type="nucleotide sequence ID" value="NM_001204385.1"/>
</dbReference>
<dbReference type="RefSeq" id="NP_001273973.1">
    <property type="nucleotide sequence ID" value="NM_001287044.1"/>
</dbReference>
<dbReference type="RefSeq" id="NP_001303939.1">
    <property type="nucleotide sequence ID" value="NM_001317010.1"/>
</dbReference>
<dbReference type="RefSeq" id="NP_003367.4">
    <molecule id="P15692-13"/>
    <property type="nucleotide sequence ID" value="NM_003376.5"/>
</dbReference>
<dbReference type="PDB" id="1BJ1">
    <property type="method" value="X-ray"/>
    <property type="resolution" value="2.40 A"/>
    <property type="chains" value="V/W=214-315"/>
</dbReference>
<dbReference type="PDB" id="1CZ8">
    <property type="method" value="X-ray"/>
    <property type="resolution" value="2.40 A"/>
    <property type="chains" value="V/W=220-313"/>
</dbReference>
<dbReference type="PDB" id="1FLT">
    <property type="method" value="X-ray"/>
    <property type="resolution" value="1.70 A"/>
    <property type="chains" value="V/W=218-315"/>
</dbReference>
<dbReference type="PDB" id="1KAT">
    <property type="method" value="NMR"/>
    <property type="chains" value="V/W=217-315"/>
</dbReference>
<dbReference type="PDB" id="1KMX">
    <property type="method" value="NMR"/>
    <property type="chains" value="A=346-395"/>
</dbReference>
<dbReference type="PDB" id="1MJV">
    <property type="method" value="X-ray"/>
    <property type="resolution" value="2.10 A"/>
    <property type="chains" value="A/B=220-314"/>
</dbReference>
<dbReference type="PDB" id="1MKG">
    <property type="method" value="X-ray"/>
    <property type="resolution" value="2.50 A"/>
    <property type="chains" value="A/B/C/D=220-314"/>
</dbReference>
<dbReference type="PDB" id="1MKK">
    <property type="method" value="X-ray"/>
    <property type="resolution" value="1.32 A"/>
    <property type="chains" value="A/B=220-314"/>
</dbReference>
<dbReference type="PDB" id="1QTY">
    <property type="method" value="X-ray"/>
    <property type="resolution" value="2.70 A"/>
    <property type="chains" value="R/S/V/W=214-315"/>
</dbReference>
<dbReference type="PDB" id="1TZH">
    <property type="method" value="X-ray"/>
    <property type="resolution" value="2.60 A"/>
    <property type="chains" value="V/W=214-315"/>
</dbReference>
<dbReference type="PDB" id="1TZI">
    <property type="method" value="X-ray"/>
    <property type="resolution" value="2.80 A"/>
    <property type="chains" value="V=214-315"/>
</dbReference>
<dbReference type="PDB" id="1VGH">
    <property type="method" value="NMR"/>
    <property type="chains" value="A=183-395"/>
</dbReference>
<dbReference type="PDB" id="1VPF">
    <property type="method" value="X-ray"/>
    <property type="resolution" value="2.50 A"/>
    <property type="chains" value="A/B/C/D=214-315"/>
</dbReference>
<dbReference type="PDB" id="1VPP">
    <property type="method" value="X-ray"/>
    <property type="resolution" value="1.90 A"/>
    <property type="chains" value="V/W=214-315"/>
</dbReference>
<dbReference type="PDB" id="2FJG">
    <property type="method" value="X-ray"/>
    <property type="resolution" value="2.80 A"/>
    <property type="chains" value="V/W=214-315"/>
</dbReference>
<dbReference type="PDB" id="2FJH">
    <property type="method" value="X-ray"/>
    <property type="resolution" value="3.10 A"/>
    <property type="chains" value="V/W=214-315"/>
</dbReference>
<dbReference type="PDB" id="2QR0">
    <property type="method" value="X-ray"/>
    <property type="resolution" value="3.50 A"/>
    <property type="chains" value="C/D/I/J/O/P/U/V=219-315"/>
</dbReference>
<dbReference type="PDB" id="2VGH">
    <property type="method" value="NMR"/>
    <property type="chains" value="A=183-395"/>
</dbReference>
<dbReference type="PDB" id="2VPF">
    <property type="method" value="X-ray"/>
    <property type="resolution" value="1.93 A"/>
    <property type="chains" value="A/B/C/D/E/F/G/H=214-315"/>
</dbReference>
<dbReference type="PDB" id="3BDY">
    <property type="method" value="X-ray"/>
    <property type="resolution" value="2.60 A"/>
    <property type="chains" value="V=214-315"/>
</dbReference>
<dbReference type="PDB" id="3P9W">
    <property type="method" value="X-ray"/>
    <property type="resolution" value="2.41 A"/>
    <property type="chains" value="A/C/E/G=215-318"/>
</dbReference>
<dbReference type="PDB" id="3QTK">
    <property type="method" value="X-ray"/>
    <property type="resolution" value="1.85 A"/>
    <property type="chains" value="A/B/C/D/E/F=214-315"/>
</dbReference>
<dbReference type="PDB" id="3S1B">
    <property type="method" value="X-ray"/>
    <property type="resolution" value="2.90 A"/>
    <property type="chains" value="V=218-313"/>
</dbReference>
<dbReference type="PDB" id="3S1K">
    <property type="method" value="X-ray"/>
    <property type="resolution" value="2.55 A"/>
    <property type="chains" value="V/W=214-315"/>
</dbReference>
<dbReference type="PDB" id="3V2A">
    <property type="method" value="X-ray"/>
    <property type="resolution" value="3.20 A"/>
    <property type="chains" value="A=207-320"/>
</dbReference>
<dbReference type="PDB" id="4DEQ">
    <property type="method" value="X-ray"/>
    <property type="resolution" value="2.65 A"/>
    <property type="chains" value="A/B=346-395"/>
</dbReference>
<dbReference type="PDB" id="4GLN">
    <property type="method" value="X-ray"/>
    <property type="resolution" value="1.60 A"/>
    <property type="chains" value="E/F=214-315"/>
</dbReference>
<dbReference type="PDB" id="4GLS">
    <property type="method" value="X-ray"/>
    <property type="resolution" value="1.60 A"/>
    <property type="chains" value="E/F=214-315"/>
</dbReference>
<dbReference type="PDB" id="4KZN">
    <property type="method" value="X-ray"/>
    <property type="resolution" value="1.71 A"/>
    <property type="chains" value="A=219-315"/>
</dbReference>
<dbReference type="PDB" id="4QAF">
    <property type="method" value="X-ray"/>
    <property type="resolution" value="1.80 A"/>
    <property type="chains" value="C/D=214-315"/>
</dbReference>
<dbReference type="PDB" id="4WPB">
    <property type="method" value="X-ray"/>
    <property type="resolution" value="3.11 A"/>
    <property type="chains" value="A/B=214-315"/>
</dbReference>
<dbReference type="PDB" id="4ZFF">
    <property type="method" value="X-ray"/>
    <property type="resolution" value="2.75 A"/>
    <property type="chains" value="C/D=217-315"/>
</dbReference>
<dbReference type="PDB" id="5DN2">
    <property type="method" value="X-ray"/>
    <property type="resolution" value="1.95 A"/>
    <property type="chains" value="E/F/G=368-395"/>
</dbReference>
<dbReference type="PDB" id="5FV1">
    <property type="method" value="X-ray"/>
    <property type="resolution" value="2.70 A"/>
    <property type="chains" value="V/W=207-316"/>
</dbReference>
<dbReference type="PDB" id="5FV2">
    <property type="method" value="X-ray"/>
    <property type="resolution" value="3.45 A"/>
    <property type="chains" value="V/W/X=207-316"/>
</dbReference>
<dbReference type="PDB" id="5HHC">
    <property type="method" value="X-ray"/>
    <property type="resolution" value="2.10 A"/>
    <property type="chains" value="A/B=214-315"/>
</dbReference>
<dbReference type="PDB" id="5HHD">
    <property type="method" value="X-ray"/>
    <property type="resolution" value="2.10 A"/>
    <property type="chains" value="A/B=214-315"/>
</dbReference>
<dbReference type="PDB" id="5O4E">
    <property type="method" value="X-ray"/>
    <property type="resolution" value="2.15 A"/>
    <property type="chains" value="E/F=219-314"/>
</dbReference>
<dbReference type="PDB" id="5T89">
    <property type="method" value="X-ray"/>
    <property type="resolution" value="4.00 A"/>
    <property type="chains" value="V/W=207-335"/>
</dbReference>
<dbReference type="PDB" id="6BFT">
    <property type="method" value="X-ray"/>
    <property type="resolution" value="2.55 A"/>
    <property type="chains" value="C/G=216-315"/>
</dbReference>
<dbReference type="PDB" id="6D3O">
    <property type="method" value="X-ray"/>
    <property type="resolution" value="3.10 A"/>
    <property type="chains" value="A/B=214-315"/>
</dbReference>
<dbReference type="PDB" id="6T9D">
    <property type="method" value="X-ray"/>
    <property type="resolution" value="2.90 A"/>
    <property type="chains" value="CCC/DDD=207-321"/>
</dbReference>
<dbReference type="PDB" id="6V7K">
    <property type="method" value="X-ray"/>
    <property type="resolution" value="2.50 A"/>
    <property type="chains" value="A/B=214-315"/>
</dbReference>
<dbReference type="PDB" id="6Z13">
    <property type="method" value="X-ray"/>
    <property type="resolution" value="1.80 A"/>
    <property type="chains" value="V/W=219-313"/>
</dbReference>
<dbReference type="PDB" id="6Z3F">
    <property type="method" value="X-ray"/>
    <property type="resolution" value="2.10 A"/>
    <property type="chains" value="V/W=219-313"/>
</dbReference>
<dbReference type="PDB" id="6ZBR">
    <property type="method" value="X-ray"/>
    <property type="resolution" value="1.60 A"/>
    <property type="chains" value="V/W=219-313"/>
</dbReference>
<dbReference type="PDB" id="6ZCD">
    <property type="method" value="X-ray"/>
    <property type="resolution" value="1.80 A"/>
    <property type="chains" value="V/W=219-313"/>
</dbReference>
<dbReference type="PDB" id="6ZFL">
    <property type="method" value="X-ray"/>
    <property type="resolution" value="1.60 A"/>
    <property type="chains" value="V/W=219-313"/>
</dbReference>
<dbReference type="PDB" id="7KEZ">
    <property type="method" value="X-ray"/>
    <property type="resolution" value="2.31 A"/>
    <property type="chains" value="V=207-316"/>
</dbReference>
<dbReference type="PDB" id="7KF0">
    <property type="method" value="X-ray"/>
    <property type="resolution" value="2.32 A"/>
    <property type="chains" value="C/V=207-316"/>
</dbReference>
<dbReference type="PDB" id="7KF1">
    <property type="method" value="X-ray"/>
    <property type="resolution" value="2.45 A"/>
    <property type="chains" value="C/F/J/V=207-316"/>
</dbReference>
<dbReference type="PDB" id="7LL8">
    <property type="method" value="X-ray"/>
    <property type="resolution" value="2.31 A"/>
    <property type="chains" value="A/B=214-315"/>
</dbReference>
<dbReference type="PDB" id="7LL9">
    <property type="method" value="X-ray"/>
    <property type="resolution" value="2.90 A"/>
    <property type="chains" value="A/B/E/F=214-315"/>
</dbReference>
<dbReference type="PDB" id="8UWZ">
    <property type="method" value="X-ray"/>
    <property type="resolution" value="3.50 A"/>
    <property type="chains" value="E/F=207-321"/>
</dbReference>
<dbReference type="PDB" id="9JU1">
    <property type="method" value="X-ray"/>
    <property type="resolution" value="1.45 A"/>
    <property type="chains" value="A=214-315"/>
</dbReference>
<dbReference type="PDB" id="9KKU">
    <property type="method" value="X-ray"/>
    <property type="resolution" value="1.46 A"/>
    <property type="chains" value="A/B=214-315"/>
</dbReference>
<dbReference type="PDBsum" id="1BJ1"/>
<dbReference type="PDBsum" id="1CZ8"/>
<dbReference type="PDBsum" id="1FLT"/>
<dbReference type="PDBsum" id="1KAT"/>
<dbReference type="PDBsum" id="1KMX"/>
<dbReference type="PDBsum" id="1MJV"/>
<dbReference type="PDBsum" id="1MKG"/>
<dbReference type="PDBsum" id="1MKK"/>
<dbReference type="PDBsum" id="1QTY"/>
<dbReference type="PDBsum" id="1TZH"/>
<dbReference type="PDBsum" id="1TZI"/>
<dbReference type="PDBsum" id="1VGH"/>
<dbReference type="PDBsum" id="1VPF"/>
<dbReference type="PDBsum" id="1VPP"/>
<dbReference type="PDBsum" id="2FJG"/>
<dbReference type="PDBsum" id="2FJH"/>
<dbReference type="PDBsum" id="2QR0"/>
<dbReference type="PDBsum" id="2VGH"/>
<dbReference type="PDBsum" id="2VPF"/>
<dbReference type="PDBsum" id="3BDY"/>
<dbReference type="PDBsum" id="3P9W"/>
<dbReference type="PDBsum" id="3QTK"/>
<dbReference type="PDBsum" id="3S1B"/>
<dbReference type="PDBsum" id="3S1K"/>
<dbReference type="PDBsum" id="3V2A"/>
<dbReference type="PDBsum" id="4DEQ"/>
<dbReference type="PDBsum" id="4GLN"/>
<dbReference type="PDBsum" id="4GLS"/>
<dbReference type="PDBsum" id="4KZN"/>
<dbReference type="PDBsum" id="4QAF"/>
<dbReference type="PDBsum" id="4WPB"/>
<dbReference type="PDBsum" id="4ZFF"/>
<dbReference type="PDBsum" id="5DN2"/>
<dbReference type="PDBsum" id="5FV1"/>
<dbReference type="PDBsum" id="5FV2"/>
<dbReference type="PDBsum" id="5HHC"/>
<dbReference type="PDBsum" id="5HHD"/>
<dbReference type="PDBsum" id="5O4E"/>
<dbReference type="PDBsum" id="5T89"/>
<dbReference type="PDBsum" id="6BFT"/>
<dbReference type="PDBsum" id="6D3O"/>
<dbReference type="PDBsum" id="6T9D"/>
<dbReference type="PDBsum" id="6V7K"/>
<dbReference type="PDBsum" id="6Z13"/>
<dbReference type="PDBsum" id="6Z3F"/>
<dbReference type="PDBsum" id="6ZBR"/>
<dbReference type="PDBsum" id="6ZCD"/>
<dbReference type="PDBsum" id="6ZFL"/>
<dbReference type="PDBsum" id="7KEZ"/>
<dbReference type="PDBsum" id="7KF0"/>
<dbReference type="PDBsum" id="7KF1"/>
<dbReference type="PDBsum" id="7LL8"/>
<dbReference type="PDBsum" id="7LL9"/>
<dbReference type="PDBsum" id="8UWZ"/>
<dbReference type="PDBsum" id="9JU1"/>
<dbReference type="PDBsum" id="9KKU"/>
<dbReference type="BMRB" id="P15692"/>
<dbReference type="SMR" id="P15692"/>
<dbReference type="BioGRID" id="113265">
    <property type="interactions" value="65"/>
</dbReference>
<dbReference type="ComplexPortal" id="CPX-1977">
    <property type="entry name" value="Vascular endothelial growth factor A complex"/>
</dbReference>
<dbReference type="CORUM" id="P15692"/>
<dbReference type="DIP" id="DIP-5740N"/>
<dbReference type="FunCoup" id="P15692">
    <property type="interactions" value="1102"/>
</dbReference>
<dbReference type="IntAct" id="P15692">
    <property type="interactions" value="25"/>
</dbReference>
<dbReference type="MINT" id="P15692"/>
<dbReference type="BindingDB" id="P15692"/>
<dbReference type="ChEMBL" id="CHEMBL1783"/>
<dbReference type="DrugBank" id="DB05434">
    <property type="generic name" value="ABT-510"/>
</dbReference>
<dbReference type="DrugBank" id="DB08885">
    <property type="generic name" value="Aflibercept"/>
</dbReference>
<dbReference type="DrugBank" id="DB00112">
    <property type="generic name" value="Bevacizumab"/>
</dbReference>
<dbReference type="DrugBank" id="DB06642">
    <property type="generic name" value="Bevasiranib"/>
</dbReference>
<dbReference type="DrugBank" id="DB14864">
    <property type="generic name" value="Brolucizumab"/>
</dbReference>
<dbReference type="DrugBank" id="DB01136">
    <property type="generic name" value="Carvedilol"/>
</dbReference>
<dbReference type="DrugBank" id="DB09301">
    <property type="generic name" value="Chondroitin sulfate"/>
</dbReference>
<dbReference type="DrugBank" id="DB06779">
    <property type="generic name" value="Dalteparin"/>
</dbReference>
<dbReference type="DrugBank" id="DB05932">
    <property type="generic name" value="Denibulin"/>
</dbReference>
<dbReference type="DrugBank" id="DB15303">
    <property type="generic name" value="Faricimab"/>
</dbReference>
<dbReference type="DrugBank" id="DB10772">
    <property type="generic name" value="Foreskin keratinocyte (neonatal)"/>
</dbReference>
<dbReference type="DrugBank" id="DB01120">
    <property type="generic name" value="Gliclazide"/>
</dbReference>
<dbReference type="DrugBank" id="DB01017">
    <property type="generic name" value="Minocycline"/>
</dbReference>
<dbReference type="DrugBank" id="DB12818">
    <property type="generic name" value="NM-3"/>
</dbReference>
<dbReference type="DrugBank" id="DB04895">
    <property type="generic name" value="Pegaptanib"/>
</dbReference>
<dbReference type="DrugBank" id="DB03088">
    <property type="generic name" value="Pidolic acid"/>
</dbReference>
<dbReference type="DrugBank" id="DB01270">
    <property type="generic name" value="Ranibizumab"/>
</dbReference>
<dbReference type="DrugBank" id="DB14911">
    <property type="generic name" value="Risuteganib"/>
</dbReference>
<dbReference type="DrugBank" id="DB05969">
    <property type="generic name" value="SNS-032"/>
</dbReference>
<dbReference type="DrugBank" id="DB06461">
    <property type="generic name" value="Squalamine"/>
</dbReference>
<dbReference type="DrugBank" id="DB05075">
    <property type="generic name" value="TG-100801"/>
</dbReference>
<dbReference type="DrugBank" id="DB05294">
    <property type="generic name" value="Vandetanib"/>
</dbReference>
<dbReference type="DrugBank" id="DB12317">
    <property type="generic name" value="Vanucizumab"/>
</dbReference>
<dbReference type="DrugBank" id="DB05890">
    <property type="generic name" value="Veglin"/>
</dbReference>
<dbReference type="DrugCentral" id="P15692"/>
<dbReference type="MoonDB" id="P15692">
    <property type="type" value="Predicted"/>
</dbReference>
<dbReference type="TCDB" id="8.A.245.1.1">
    <property type="family name" value="the vascular endothelial growth factor (vegf) family"/>
</dbReference>
<dbReference type="GlyCosmos" id="P15692">
    <property type="glycosylation" value="1 site, No reported glycans"/>
</dbReference>
<dbReference type="GlyGen" id="P15692">
    <property type="glycosylation" value="3 sites"/>
</dbReference>
<dbReference type="iPTMnet" id="P15692"/>
<dbReference type="PhosphoSitePlus" id="P15692"/>
<dbReference type="BioMuta" id="VEGFA"/>
<dbReference type="DMDM" id="17380528"/>
<dbReference type="jPOST" id="P15692"/>
<dbReference type="MassIVE" id="P15692"/>
<dbReference type="PaxDb" id="9606-ENSP00000478570"/>
<dbReference type="PeptideAtlas" id="P15692"/>
<dbReference type="ProteomicsDB" id="34350"/>
<dbReference type="ProteomicsDB" id="34645"/>
<dbReference type="ProteomicsDB" id="34652"/>
<dbReference type="ProteomicsDB" id="34682"/>
<dbReference type="ProteomicsDB" id="35749"/>
<dbReference type="ProteomicsDB" id="40743"/>
<dbReference type="ProteomicsDB" id="53195">
    <molecule id="P15692-1"/>
</dbReference>
<dbReference type="ProteomicsDB" id="53196">
    <molecule id="P15692-10"/>
</dbReference>
<dbReference type="ProteomicsDB" id="53197">
    <molecule id="P15692-11"/>
</dbReference>
<dbReference type="ProteomicsDB" id="53198">
    <molecule id="P15692-12"/>
</dbReference>
<dbReference type="ProteomicsDB" id="53199">
    <molecule id="P15692-13"/>
</dbReference>
<dbReference type="ProteomicsDB" id="53200">
    <molecule id="P15692-14"/>
</dbReference>
<dbReference type="ProteomicsDB" id="53201">
    <molecule id="P15692-2"/>
</dbReference>
<dbReference type="ProteomicsDB" id="53202">
    <molecule id="P15692-3"/>
</dbReference>
<dbReference type="ProteomicsDB" id="53203">
    <molecule id="P15692-4"/>
</dbReference>
<dbReference type="ProteomicsDB" id="53204">
    <molecule id="P15692-5"/>
</dbReference>
<dbReference type="ProteomicsDB" id="53205">
    <molecule id="P15692-6"/>
</dbReference>
<dbReference type="ProteomicsDB" id="53206">
    <molecule id="P15692-8"/>
</dbReference>
<dbReference type="ProteomicsDB" id="53207">
    <molecule id="P15692-9"/>
</dbReference>
<dbReference type="ABCD" id="P15692">
    <property type="antibodies" value="32 sequenced antibodies"/>
</dbReference>
<dbReference type="Antibodypedia" id="3956">
    <property type="antibodies" value="2841 antibodies from 55 providers"/>
</dbReference>
<dbReference type="CPTC" id="P15692">
    <property type="antibodies" value="1 antibody"/>
</dbReference>
<dbReference type="DNASU" id="7422"/>
<dbReference type="Ensembl" id="ENST00000324450.11">
    <molecule id="P15692-18"/>
    <property type="protein sequence ID" value="ENSP00000317598.7"/>
    <property type="gene ID" value="ENSG00000112715.26"/>
</dbReference>
<dbReference type="Ensembl" id="ENST00000372055.9">
    <molecule id="P15692-14"/>
    <property type="protein sequence ID" value="ENSP00000361125.5"/>
    <property type="gene ID" value="ENSG00000112715.26"/>
</dbReference>
<dbReference type="Ensembl" id="ENST00000372064.9">
    <molecule id="P15692-12"/>
    <property type="protein sequence ID" value="ENSP00000361134.5"/>
    <property type="gene ID" value="ENSG00000112715.26"/>
</dbReference>
<dbReference type="Ensembl" id="ENST00000372067.8">
    <molecule id="P15692-11"/>
    <property type="protein sequence ID" value="ENSP00000361137.4"/>
    <property type="gene ID" value="ENSG00000112715.26"/>
</dbReference>
<dbReference type="Ensembl" id="ENST00000372077.8">
    <molecule id="P15692-9"/>
    <property type="protein sequence ID" value="ENSP00000361148.4"/>
    <property type="gene ID" value="ENSG00000112715.26"/>
</dbReference>
<dbReference type="Ensembl" id="ENST00000413642.8">
    <molecule id="P15692-16"/>
    <property type="protein sequence ID" value="ENSP00000389864.4"/>
    <property type="gene ID" value="ENSG00000112715.26"/>
</dbReference>
<dbReference type="Ensembl" id="ENST00000417285.7">
    <molecule id="P15692-17"/>
    <property type="protein sequence ID" value="ENSP00000388663.3"/>
    <property type="gene ID" value="ENSG00000112715.26"/>
</dbReference>
<dbReference type="Ensembl" id="ENST00000457104.6">
    <molecule id="P15692-10"/>
    <property type="protein sequence ID" value="ENSP00000409911.2"/>
    <property type="gene ID" value="ENSG00000112715.26"/>
</dbReference>
<dbReference type="Ensembl" id="ENST00000482630.7">
    <molecule id="P15692-15"/>
    <property type="protein sequence ID" value="ENSP00000421561.2"/>
    <property type="gene ID" value="ENSG00000112715.26"/>
</dbReference>
<dbReference type="Ensembl" id="ENST00000518689.5">
    <molecule id="P15692-3"/>
    <property type="protein sequence ID" value="ENSP00000430829.1"/>
    <property type="gene ID" value="ENSG00000112715.26"/>
</dbReference>
<dbReference type="Ensembl" id="ENST00000518824.5">
    <molecule id="P15692-8"/>
    <property type="protein sequence ID" value="ENSP00000430002.1"/>
    <property type="gene ID" value="ENSG00000112715.26"/>
</dbReference>
<dbReference type="Ensembl" id="ENST00000520948.5">
    <molecule id="P15692-2"/>
    <property type="protein sequence ID" value="ENSP00000428321.1"/>
    <property type="gene ID" value="ENSG00000112715.26"/>
</dbReference>
<dbReference type="Ensembl" id="ENST00000523125.5">
    <molecule id="P15692-5"/>
    <property type="protein sequence ID" value="ENSP00000429008.1"/>
    <property type="gene ID" value="ENSG00000112715.26"/>
</dbReference>
<dbReference type="Ensembl" id="ENST00000523873.5">
    <molecule id="P15692-1"/>
    <property type="protein sequence ID" value="ENSP00000430479.1"/>
    <property type="gene ID" value="ENSG00000112715.26"/>
</dbReference>
<dbReference type="Ensembl" id="ENST00000523950.5">
    <molecule id="P15692-4"/>
    <property type="protein sequence ID" value="ENSP00000429643.1"/>
    <property type="gene ID" value="ENSG00000112715.26"/>
</dbReference>
<dbReference type="Ensembl" id="ENST00000672860.3">
    <molecule id="P15692-13"/>
    <property type="protein sequence ID" value="ENSP00000500082.3"/>
    <property type="gene ID" value="ENSG00000112715.26"/>
</dbReference>
<dbReference type="GeneID" id="7422"/>
<dbReference type="KEGG" id="hsa:7422"/>
<dbReference type="MANE-Select" id="ENST00000672860.3">
    <property type="protein sequence ID" value="ENSP00000500082.3"/>
    <property type="RefSeq nucleotide sequence ID" value="NM_003376.6"/>
    <property type="RefSeq protein sequence ID" value="NP_003367.4"/>
</dbReference>
<dbReference type="UCSC" id="uc003owd.5">
    <molecule id="P15692-13"/>
    <property type="organism name" value="human"/>
</dbReference>
<dbReference type="AGR" id="HGNC:12680"/>
<dbReference type="CTD" id="7422"/>
<dbReference type="DisGeNET" id="7422"/>
<dbReference type="GeneCards" id="VEGFA"/>
<dbReference type="HGNC" id="HGNC:12680">
    <property type="gene designation" value="VEGFA"/>
</dbReference>
<dbReference type="HPA" id="ENSG00000112715">
    <property type="expression patterns" value="Low tissue specificity"/>
</dbReference>
<dbReference type="MalaCards" id="VEGFA"/>
<dbReference type="MIM" id="192240">
    <property type="type" value="gene"/>
</dbReference>
<dbReference type="MIM" id="603933">
    <property type="type" value="phenotype"/>
</dbReference>
<dbReference type="neXtProt" id="NX_P15692"/>
<dbReference type="OpenTargets" id="ENSG00000112715"/>
<dbReference type="PharmGKB" id="PA37302"/>
<dbReference type="VEuPathDB" id="HostDB:ENSG00000112715"/>
<dbReference type="eggNOG" id="ENOG502QVI8">
    <property type="taxonomic scope" value="Eukaryota"/>
</dbReference>
<dbReference type="GeneTree" id="ENSGT00940000157284"/>
<dbReference type="HOGENOM" id="CLU_042996_3_0_1"/>
<dbReference type="InParanoid" id="P15692"/>
<dbReference type="OMA" id="HDLECEC"/>
<dbReference type="OrthoDB" id="6370328at2759"/>
<dbReference type="PAN-GO" id="P15692">
    <property type="GO annotations" value="14 GO annotations based on evolutionary models"/>
</dbReference>
<dbReference type="PhylomeDB" id="P15692"/>
<dbReference type="PathwayCommons" id="P15692"/>
<dbReference type="Reactome" id="R-HSA-114608">
    <property type="pathway name" value="Platelet degranulation"/>
</dbReference>
<dbReference type="Reactome" id="R-HSA-1234158">
    <property type="pathway name" value="Regulation of gene expression by Hypoxia-inducible Factor"/>
</dbReference>
<dbReference type="Reactome" id="R-HSA-194138">
    <property type="pathway name" value="Signaling by VEGF"/>
</dbReference>
<dbReference type="Reactome" id="R-HSA-194313">
    <property type="pathway name" value="VEGF ligand-receptor interactions"/>
</dbReference>
<dbReference type="Reactome" id="R-HSA-195399">
    <property type="pathway name" value="VEGF binds to VEGFR leading to receptor dimerization"/>
</dbReference>
<dbReference type="Reactome" id="R-HSA-4420097">
    <molecule id="P15692-4"/>
    <property type="pathway name" value="VEGFA-VEGFR2 Pathway"/>
</dbReference>
<dbReference type="Reactome" id="R-HSA-5218921">
    <molecule id="P15692-4"/>
    <property type="pathway name" value="VEGFR2 mediated cell proliferation"/>
</dbReference>
<dbReference type="Reactome" id="R-HSA-6785807">
    <property type="pathway name" value="Interleukin-4 and Interleukin-13 signaling"/>
</dbReference>
<dbReference type="Reactome" id="R-HSA-8866910">
    <property type="pathway name" value="TFAP2 (AP-2) family regulates transcription of growth factors and their receptors"/>
</dbReference>
<dbReference type="Reactome" id="R-HSA-9679191">
    <molecule id="P15692-4"/>
    <property type="pathway name" value="Potential therapeutics for SARS"/>
</dbReference>
<dbReference type="SignaLink" id="P15692"/>
<dbReference type="SIGNOR" id="P15692"/>
<dbReference type="BioGRID-ORCS" id="7422">
    <property type="hits" value="14 hits in 1166 CRISPR screens"/>
</dbReference>
<dbReference type="ChiTaRS" id="VEGFA">
    <property type="organism name" value="human"/>
</dbReference>
<dbReference type="EvolutionaryTrace" id="P15692"/>
<dbReference type="GeneWiki" id="Vascular_endothelial_growth_factor_A"/>
<dbReference type="GenomeRNAi" id="7422"/>
<dbReference type="Pharos" id="P15692">
    <property type="development level" value="Tclin"/>
</dbReference>
<dbReference type="PRO" id="PR:P15692"/>
<dbReference type="Proteomes" id="UP000005640">
    <property type="component" value="Chromosome 6"/>
</dbReference>
<dbReference type="RNAct" id="P15692">
    <property type="molecule type" value="protein"/>
</dbReference>
<dbReference type="Bgee" id="ENSG00000112715">
    <property type="expression patterns" value="Expressed in right lobe of thyroid gland and 203 other cell types or tissues"/>
</dbReference>
<dbReference type="ExpressionAtlas" id="P15692">
    <property type="expression patterns" value="baseline and differential"/>
</dbReference>
<dbReference type="GO" id="GO:0005912">
    <property type="term" value="C:adherens junction"/>
    <property type="evidence" value="ECO:0000314"/>
    <property type="project" value="ARUK-UCL"/>
</dbReference>
<dbReference type="GO" id="GO:0009986">
    <property type="term" value="C:cell surface"/>
    <property type="evidence" value="ECO:0000314"/>
    <property type="project" value="BHF-UCL"/>
</dbReference>
<dbReference type="GO" id="GO:0005737">
    <property type="term" value="C:cytoplasm"/>
    <property type="evidence" value="ECO:0000314"/>
    <property type="project" value="UniProtKB"/>
</dbReference>
<dbReference type="GO" id="GO:0005783">
    <property type="term" value="C:endoplasmic reticulum"/>
    <property type="evidence" value="ECO:0007669"/>
    <property type="project" value="UniProtKB-SubCell"/>
</dbReference>
<dbReference type="GO" id="GO:0031012">
    <property type="term" value="C:extracellular matrix"/>
    <property type="evidence" value="ECO:0000303"/>
    <property type="project" value="UniProtKB"/>
</dbReference>
<dbReference type="GO" id="GO:0005576">
    <property type="term" value="C:extracellular region"/>
    <property type="evidence" value="ECO:0000304"/>
    <property type="project" value="Reactome"/>
</dbReference>
<dbReference type="GO" id="GO:0005615">
    <property type="term" value="C:extracellular space"/>
    <property type="evidence" value="ECO:0000314"/>
    <property type="project" value="UniProtKB"/>
</dbReference>
<dbReference type="GO" id="GO:0005794">
    <property type="term" value="C:Golgi apparatus"/>
    <property type="evidence" value="ECO:0007669"/>
    <property type="project" value="UniProtKB-SubCell"/>
</dbReference>
<dbReference type="GO" id="GO:0016020">
    <property type="term" value="C:membrane"/>
    <property type="evidence" value="ECO:0007669"/>
    <property type="project" value="InterPro"/>
</dbReference>
<dbReference type="GO" id="GO:0005634">
    <property type="term" value="C:nucleus"/>
    <property type="evidence" value="ECO:0007669"/>
    <property type="project" value="UniProtKB-SubCell"/>
</dbReference>
<dbReference type="GO" id="GO:0031093">
    <property type="term" value="C:platelet alpha granule lumen"/>
    <property type="evidence" value="ECO:0000304"/>
    <property type="project" value="Reactome"/>
</dbReference>
<dbReference type="GO" id="GO:0030141">
    <property type="term" value="C:secretory granule"/>
    <property type="evidence" value="ECO:0000314"/>
    <property type="project" value="UniProtKB"/>
</dbReference>
<dbReference type="GO" id="GO:1990150">
    <property type="term" value="C:VEGF-A complex"/>
    <property type="evidence" value="ECO:0000353"/>
    <property type="project" value="ComplexPortal"/>
</dbReference>
<dbReference type="GO" id="GO:0042056">
    <property type="term" value="F:chemoattractant activity"/>
    <property type="evidence" value="ECO:0000314"/>
    <property type="project" value="UniProtKB"/>
</dbReference>
<dbReference type="GO" id="GO:0005125">
    <property type="term" value="F:cytokine activity"/>
    <property type="evidence" value="ECO:0000314"/>
    <property type="project" value="BHF-UCL"/>
</dbReference>
<dbReference type="GO" id="GO:0050840">
    <property type="term" value="F:extracellular matrix binding"/>
    <property type="evidence" value="ECO:0000305"/>
    <property type="project" value="BHF-UCL"/>
</dbReference>
<dbReference type="GO" id="GO:0001968">
    <property type="term" value="F:fibronectin binding"/>
    <property type="evidence" value="ECO:0000314"/>
    <property type="project" value="BHF-UCL"/>
</dbReference>
<dbReference type="GO" id="GO:0008083">
    <property type="term" value="F:growth factor activity"/>
    <property type="evidence" value="ECO:0000314"/>
    <property type="project" value="BHF-UCL"/>
</dbReference>
<dbReference type="GO" id="GO:0008201">
    <property type="term" value="F:heparin binding"/>
    <property type="evidence" value="ECO:0000314"/>
    <property type="project" value="UniProtKB"/>
</dbReference>
<dbReference type="GO" id="GO:0042802">
    <property type="term" value="F:identical protein binding"/>
    <property type="evidence" value="ECO:0000353"/>
    <property type="project" value="IntAct"/>
</dbReference>
<dbReference type="GO" id="GO:0038191">
    <property type="term" value="F:neuropilin binding"/>
    <property type="evidence" value="ECO:0000353"/>
    <property type="project" value="BHF-UCL"/>
</dbReference>
<dbReference type="GO" id="GO:0005161">
    <property type="term" value="F:platelet-derived growth factor receptor binding"/>
    <property type="evidence" value="ECO:0000353"/>
    <property type="project" value="BHF-UCL"/>
</dbReference>
<dbReference type="GO" id="GO:0042803">
    <property type="term" value="F:protein homodimerization activity"/>
    <property type="evidence" value="ECO:0000250"/>
    <property type="project" value="BHF-UCL"/>
</dbReference>
<dbReference type="GO" id="GO:0048018">
    <property type="term" value="F:receptor ligand activity"/>
    <property type="evidence" value="ECO:0000315"/>
    <property type="project" value="BHF-UCL"/>
</dbReference>
<dbReference type="GO" id="GO:0030297">
    <property type="term" value="F:transmembrane receptor protein tyrosine kinase activator activity"/>
    <property type="evidence" value="ECO:0000314"/>
    <property type="project" value="BHF-UCL"/>
</dbReference>
<dbReference type="GO" id="GO:0043183">
    <property type="term" value="F:vascular endothelial growth factor receptor 1 binding"/>
    <property type="evidence" value="ECO:0000353"/>
    <property type="project" value="BHF-UCL"/>
</dbReference>
<dbReference type="GO" id="GO:0043184">
    <property type="term" value="F:vascular endothelial growth factor receptor 2 binding"/>
    <property type="evidence" value="ECO:0000353"/>
    <property type="project" value="UniProtKB"/>
</dbReference>
<dbReference type="GO" id="GO:0005172">
    <property type="term" value="F:vascular endothelial growth factor receptor binding"/>
    <property type="evidence" value="ECO:0000353"/>
    <property type="project" value="UniProtKB"/>
</dbReference>
<dbReference type="GO" id="GO:0001525">
    <property type="term" value="P:angiogenesis"/>
    <property type="evidence" value="ECO:0000314"/>
    <property type="project" value="UniProtKB"/>
</dbReference>
<dbReference type="GO" id="GO:0006915">
    <property type="term" value="P:apoptotic process"/>
    <property type="evidence" value="ECO:0007669"/>
    <property type="project" value="Ensembl"/>
</dbReference>
<dbReference type="GO" id="GO:0048844">
    <property type="term" value="P:artery morphogenesis"/>
    <property type="evidence" value="ECO:0000250"/>
    <property type="project" value="BHF-UCL"/>
</dbReference>
<dbReference type="GO" id="GO:0002575">
    <property type="term" value="P:basophil chemotaxis"/>
    <property type="evidence" value="ECO:0000314"/>
    <property type="project" value="UniProtKB"/>
</dbReference>
<dbReference type="GO" id="GO:0060346">
    <property type="term" value="P:bone trabecula formation"/>
    <property type="evidence" value="ECO:0007669"/>
    <property type="project" value="Ensembl"/>
</dbReference>
<dbReference type="GO" id="GO:0001569">
    <property type="term" value="P:branching involved in blood vessel morphogenesis"/>
    <property type="evidence" value="ECO:0000315"/>
    <property type="project" value="BHF-UCL"/>
</dbReference>
<dbReference type="GO" id="GO:0048593">
    <property type="term" value="P:camera-type eye morphogenesis"/>
    <property type="evidence" value="ECO:0000250"/>
    <property type="project" value="BHF-UCL"/>
</dbReference>
<dbReference type="GO" id="GO:0055013">
    <property type="term" value="P:cardiac muscle cell development"/>
    <property type="evidence" value="ECO:0000250"/>
    <property type="project" value="BHF-UCL"/>
</dbReference>
<dbReference type="GO" id="GO:0060948">
    <property type="term" value="P:cardiac vascular smooth muscle cell development"/>
    <property type="evidence" value="ECO:0000250"/>
    <property type="project" value="BHF-UCL"/>
</dbReference>
<dbReference type="GO" id="GO:0048469">
    <property type="term" value="P:cell maturation"/>
    <property type="evidence" value="ECO:0000250"/>
    <property type="project" value="BHF-UCL"/>
</dbReference>
<dbReference type="GO" id="GO:0002042">
    <property type="term" value="P:cell migration involved in sprouting angiogenesis"/>
    <property type="evidence" value="ECO:0000314"/>
    <property type="project" value="BHF-UCL"/>
</dbReference>
<dbReference type="GO" id="GO:0098609">
    <property type="term" value="P:cell-cell adhesion"/>
    <property type="evidence" value="ECO:0007669"/>
    <property type="project" value="Ensembl"/>
</dbReference>
<dbReference type="GO" id="GO:0071456">
    <property type="term" value="P:cellular response to hypoxia"/>
    <property type="evidence" value="ECO:0000314"/>
    <property type="project" value="MGI"/>
</dbReference>
<dbReference type="GO" id="GO:0035924">
    <property type="term" value="P:cellular response to vascular endothelial growth factor stimulus"/>
    <property type="evidence" value="ECO:0000314"/>
    <property type="project" value="BHF-UCL"/>
</dbReference>
<dbReference type="GO" id="GO:0097533">
    <property type="term" value="P:cellular stress response to acid chemical"/>
    <property type="evidence" value="ECO:0000314"/>
    <property type="project" value="BHF-UCL"/>
</dbReference>
<dbReference type="GO" id="GO:0071679">
    <property type="term" value="P:commissural neuron axon guidance"/>
    <property type="evidence" value="ECO:0000250"/>
    <property type="project" value="BHF-UCL"/>
</dbReference>
<dbReference type="GO" id="GO:0060982">
    <property type="term" value="P:coronary artery morphogenesis"/>
    <property type="evidence" value="ECO:0000250"/>
    <property type="project" value="BHF-UCL"/>
</dbReference>
<dbReference type="GO" id="GO:0003169">
    <property type="term" value="P:coronary vein morphogenesis"/>
    <property type="evidence" value="ECO:0000250"/>
    <property type="project" value="BHF-UCL"/>
</dbReference>
<dbReference type="GO" id="GO:0071542">
    <property type="term" value="P:dopaminergic neuron differentiation"/>
    <property type="evidence" value="ECO:0000250"/>
    <property type="project" value="BHF-UCL"/>
</dbReference>
<dbReference type="GO" id="GO:0035767">
    <property type="term" value="P:endothelial cell chemotaxis"/>
    <property type="evidence" value="ECO:0000314"/>
    <property type="project" value="BHF-UCL"/>
</dbReference>
<dbReference type="GO" id="GO:0001935">
    <property type="term" value="P:endothelial cell proliferation"/>
    <property type="evidence" value="ECO:0007669"/>
    <property type="project" value="Ensembl"/>
</dbReference>
<dbReference type="GO" id="GO:0030855">
    <property type="term" value="P:epithelial cell differentiation"/>
    <property type="evidence" value="ECO:0000250"/>
    <property type="project" value="BHF-UCL"/>
</dbReference>
<dbReference type="GO" id="GO:0002070">
    <property type="term" value="P:epithelial cell maturation"/>
    <property type="evidence" value="ECO:0007669"/>
    <property type="project" value="Ensembl"/>
</dbReference>
<dbReference type="GO" id="GO:0042462">
    <property type="term" value="P:eye photoreceptor cell development"/>
    <property type="evidence" value="ECO:0000250"/>
    <property type="project" value="BHF-UCL"/>
</dbReference>
<dbReference type="GO" id="GO:0003007">
    <property type="term" value="P:heart morphogenesis"/>
    <property type="evidence" value="ECO:0000250"/>
    <property type="project" value="BHF-UCL"/>
</dbReference>
<dbReference type="GO" id="GO:0048873">
    <property type="term" value="P:homeostasis of number of cells within a tissue"/>
    <property type="evidence" value="ECO:0007669"/>
    <property type="project" value="Ensembl"/>
</dbReference>
<dbReference type="GO" id="GO:0001701">
    <property type="term" value="P:in utero embryonic development"/>
    <property type="evidence" value="ECO:0000250"/>
    <property type="project" value="BHF-UCL"/>
</dbReference>
<dbReference type="GO" id="GO:0050930">
    <property type="term" value="P:induction of positive chemotaxis"/>
    <property type="evidence" value="ECO:0000314"/>
    <property type="project" value="UniProtKB"/>
</dbReference>
<dbReference type="GO" id="GO:0001822">
    <property type="term" value="P:kidney development"/>
    <property type="evidence" value="ECO:0000250"/>
    <property type="project" value="BHF-UCL"/>
</dbReference>
<dbReference type="GO" id="GO:0007595">
    <property type="term" value="P:lactation"/>
    <property type="evidence" value="ECO:0000250"/>
    <property type="project" value="BHF-UCL"/>
</dbReference>
<dbReference type="GO" id="GO:0030324">
    <property type="term" value="P:lung development"/>
    <property type="evidence" value="ECO:0000250"/>
    <property type="project" value="BHF-UCL"/>
</dbReference>
<dbReference type="GO" id="GO:0060426">
    <property type="term" value="P:lung vasculature development"/>
    <property type="evidence" value="ECO:0007669"/>
    <property type="project" value="Ensembl"/>
</dbReference>
<dbReference type="GO" id="GO:0036303">
    <property type="term" value="P:lymph vessel morphogenesis"/>
    <property type="evidence" value="ECO:0000250"/>
    <property type="project" value="BHF-UCL"/>
</dbReference>
<dbReference type="GO" id="GO:0001946">
    <property type="term" value="P:lymphangiogenesis"/>
    <property type="evidence" value="ECO:0007669"/>
    <property type="project" value="Ensembl"/>
</dbReference>
<dbReference type="GO" id="GO:0030225">
    <property type="term" value="P:macrophage differentiation"/>
    <property type="evidence" value="ECO:0000314"/>
    <property type="project" value="DFLAT"/>
</dbReference>
<dbReference type="GO" id="GO:0060749">
    <property type="term" value="P:mammary gland alveolus development"/>
    <property type="evidence" value="ECO:0000250"/>
    <property type="project" value="BHF-UCL"/>
</dbReference>
<dbReference type="GO" id="GO:0007498">
    <property type="term" value="P:mesoderm development"/>
    <property type="evidence" value="ECO:0000250"/>
    <property type="project" value="BHF-UCL"/>
</dbReference>
<dbReference type="GO" id="GO:0030224">
    <property type="term" value="P:monocyte differentiation"/>
    <property type="evidence" value="ECO:0000314"/>
    <property type="project" value="DFLAT"/>
</dbReference>
<dbReference type="GO" id="GO:0097475">
    <property type="term" value="P:motor neuron migration"/>
    <property type="evidence" value="ECO:0000250"/>
    <property type="project" value="UniProtKB"/>
</dbReference>
<dbReference type="GO" id="GO:1903392">
    <property type="term" value="P:negative regulation of adherens junction organization"/>
    <property type="evidence" value="ECO:0000314"/>
    <property type="project" value="ARUK-UCL"/>
</dbReference>
<dbReference type="GO" id="GO:0043066">
    <property type="term" value="P:negative regulation of apoptotic process"/>
    <property type="evidence" value="ECO:0000315"/>
    <property type="project" value="UniProtKB"/>
</dbReference>
<dbReference type="GO" id="GO:1905604">
    <property type="term" value="P:negative regulation of blood-brain barrier permeability"/>
    <property type="evidence" value="ECO:0000315"/>
    <property type="project" value="ARUK-UCL"/>
</dbReference>
<dbReference type="GO" id="GO:2000048">
    <property type="term" value="P:negative regulation of cell-cell adhesion mediated by cadherin"/>
    <property type="evidence" value="ECO:0000314"/>
    <property type="project" value="ARUK-UCL"/>
</dbReference>
<dbReference type="GO" id="GO:0010719">
    <property type="term" value="P:negative regulation of epithelial to mesenchymal transition"/>
    <property type="evidence" value="ECO:0007669"/>
    <property type="project" value="Ensembl"/>
</dbReference>
<dbReference type="GO" id="GO:1903141">
    <property type="term" value="P:negative regulation of establishment of endothelial barrier"/>
    <property type="evidence" value="ECO:0000314"/>
    <property type="project" value="ARUK-UCL"/>
</dbReference>
<dbReference type="GO" id="GO:0045599">
    <property type="term" value="P:negative regulation of fat cell differentiation"/>
    <property type="evidence" value="ECO:0007669"/>
    <property type="project" value="Ensembl"/>
</dbReference>
<dbReference type="GO" id="GO:0010629">
    <property type="term" value="P:negative regulation of gene expression"/>
    <property type="evidence" value="ECO:0000314"/>
    <property type="project" value="BHF-UCL"/>
</dbReference>
<dbReference type="GO" id="GO:1902894">
    <property type="term" value="P:negative regulation of miRNA transcription"/>
    <property type="evidence" value="ECO:0000303"/>
    <property type="project" value="BHF-UCL"/>
</dbReference>
<dbReference type="GO" id="GO:0000122">
    <property type="term" value="P:negative regulation of transcription by RNA polymerase II"/>
    <property type="evidence" value="ECO:0000314"/>
    <property type="project" value="BHF-UCL"/>
</dbReference>
<dbReference type="GO" id="GO:0007399">
    <property type="term" value="P:nervous system development"/>
    <property type="evidence" value="ECO:0000304"/>
    <property type="project" value="UniProtKB"/>
</dbReference>
<dbReference type="GO" id="GO:0007405">
    <property type="term" value="P:neuroblast proliferation"/>
    <property type="evidence" value="ECO:0007669"/>
    <property type="project" value="Ensembl"/>
</dbReference>
<dbReference type="GO" id="GO:0003151">
    <property type="term" value="P:outflow tract morphogenesis"/>
    <property type="evidence" value="ECO:0000250"/>
    <property type="project" value="BHF-UCL"/>
</dbReference>
<dbReference type="GO" id="GO:0001541">
    <property type="term" value="P:ovarian follicle development"/>
    <property type="evidence" value="ECO:0000250"/>
    <property type="project" value="BHF-UCL"/>
</dbReference>
<dbReference type="GO" id="GO:0007200">
    <property type="term" value="P:phospholipase C-activating G protein-coupled receptor signaling pathway"/>
    <property type="evidence" value="ECO:0000314"/>
    <property type="project" value="BHF-UCL"/>
</dbReference>
<dbReference type="GO" id="GO:0050918">
    <property type="term" value="P:positive chemotaxis"/>
    <property type="evidence" value="ECO:0000314"/>
    <property type="project" value="BHF-UCL"/>
</dbReference>
<dbReference type="GO" id="GO:0045766">
    <property type="term" value="P:positive regulation of angiogenesis"/>
    <property type="evidence" value="ECO:0000314"/>
    <property type="project" value="BHF-UCL"/>
</dbReference>
<dbReference type="GO" id="GO:0048842">
    <property type="term" value="P:positive regulation of axon extension involved in axon guidance"/>
    <property type="evidence" value="ECO:0000250"/>
    <property type="project" value="BHF-UCL"/>
</dbReference>
<dbReference type="GO" id="GO:1905555">
    <property type="term" value="P:positive regulation of blood vessel branching"/>
    <property type="evidence" value="ECO:0000314"/>
    <property type="project" value="BHF-UCL"/>
</dbReference>
<dbReference type="GO" id="GO:0043536">
    <property type="term" value="P:positive regulation of blood vessel endothelial cell migration"/>
    <property type="evidence" value="ECO:0000314"/>
    <property type="project" value="BHF-UCL"/>
</dbReference>
<dbReference type="GO" id="GO:1903589">
    <property type="term" value="P:positive regulation of blood vessel endothelial cell proliferation involved in sprouting angiogenesis"/>
    <property type="evidence" value="ECO:0000315"/>
    <property type="project" value="ARUK-UCL"/>
</dbReference>
<dbReference type="GO" id="GO:0090190">
    <property type="term" value="P:positive regulation of branching involved in ureteric bud morphogenesis"/>
    <property type="evidence" value="ECO:0000250"/>
    <property type="project" value="BHF-UCL"/>
</dbReference>
<dbReference type="GO" id="GO:0043123">
    <property type="term" value="P:positive regulation of canonical NF-kappaB signal transduction"/>
    <property type="evidence" value="ECO:0000303"/>
    <property type="project" value="BHF-UCL"/>
</dbReference>
<dbReference type="GO" id="GO:0045785">
    <property type="term" value="P:positive regulation of cell adhesion"/>
    <property type="evidence" value="ECO:0000314"/>
    <property type="project" value="UniProtKB"/>
</dbReference>
<dbReference type="GO" id="GO:0051781">
    <property type="term" value="P:positive regulation of cell division"/>
    <property type="evidence" value="ECO:0007669"/>
    <property type="project" value="UniProtKB-KW"/>
</dbReference>
<dbReference type="GO" id="GO:0030335">
    <property type="term" value="P:positive regulation of cell migration"/>
    <property type="evidence" value="ECO:0000314"/>
    <property type="project" value="BHF-UCL"/>
</dbReference>
<dbReference type="GO" id="GO:0090050">
    <property type="term" value="P:positive regulation of cell migration involved in sprouting angiogenesis"/>
    <property type="evidence" value="ECO:0000314"/>
    <property type="project" value="BHF-UCL"/>
</dbReference>
<dbReference type="GO" id="GO:0008284">
    <property type="term" value="P:positive regulation of cell population proliferation"/>
    <property type="evidence" value="ECO:0000314"/>
    <property type="project" value="BHF-UCL"/>
</dbReference>
<dbReference type="GO" id="GO:0038091">
    <property type="term" value="P:positive regulation of cell proliferation by VEGF-activated platelet derived growth factor receptor signaling pathway"/>
    <property type="evidence" value="ECO:0000314"/>
    <property type="project" value="BHF-UCL"/>
</dbReference>
<dbReference type="GO" id="GO:0120162">
    <property type="term" value="P:positive regulation of cold-induced thermogenesis"/>
    <property type="evidence" value="ECO:0000250"/>
    <property type="project" value="YuBioLab"/>
</dbReference>
<dbReference type="GO" id="GO:2000573">
    <property type="term" value="P:positive regulation of DNA biosynthetic process"/>
    <property type="evidence" value="ECO:0000314"/>
    <property type="project" value="UniProtKB"/>
</dbReference>
<dbReference type="GO" id="GO:2001028">
    <property type="term" value="P:positive regulation of endothelial cell chemotaxis"/>
    <property type="evidence" value="ECO:0000314"/>
    <property type="project" value="BHF-UCL"/>
</dbReference>
<dbReference type="GO" id="GO:0038033">
    <property type="term" value="P:positive regulation of endothelial cell chemotaxis by VEGF-activated vascular endothelial growth factor receptor signaling pathway"/>
    <property type="evidence" value="ECO:0000314"/>
    <property type="project" value="ComplexPortal"/>
</dbReference>
<dbReference type="GO" id="GO:0010595">
    <property type="term" value="P:positive regulation of endothelial cell migration"/>
    <property type="evidence" value="ECO:0000314"/>
    <property type="project" value="BHF-UCL"/>
</dbReference>
<dbReference type="GO" id="GO:0001938">
    <property type="term" value="P:positive regulation of endothelial cell proliferation"/>
    <property type="evidence" value="ECO:0000314"/>
    <property type="project" value="BHF-UCL"/>
</dbReference>
<dbReference type="GO" id="GO:0050679">
    <property type="term" value="P:positive regulation of epithelial cell proliferation"/>
    <property type="evidence" value="ECO:0000250"/>
    <property type="project" value="BHF-UCL"/>
</dbReference>
<dbReference type="GO" id="GO:1905278">
    <property type="term" value="P:positive regulation of epithelial tube formation"/>
    <property type="evidence" value="ECO:0000314"/>
    <property type="project" value="BHF-UCL"/>
</dbReference>
<dbReference type="GO" id="GO:0070374">
    <property type="term" value="P:positive regulation of ERK1 and ERK2 cascade"/>
    <property type="evidence" value="ECO:0000314"/>
    <property type="project" value="BHF-UCL"/>
</dbReference>
<dbReference type="GO" id="GO:0051894">
    <property type="term" value="P:positive regulation of focal adhesion assembly"/>
    <property type="evidence" value="ECO:0000314"/>
    <property type="project" value="UniProtKB"/>
</dbReference>
<dbReference type="GO" id="GO:0010628">
    <property type="term" value="P:positive regulation of gene expression"/>
    <property type="evidence" value="ECO:0000314"/>
    <property type="project" value="BHF-UCL"/>
</dbReference>
<dbReference type="GO" id="GO:0002687">
    <property type="term" value="P:positive regulation of leukocyte migration"/>
    <property type="evidence" value="ECO:0000304"/>
    <property type="project" value="BHF-UCL"/>
</dbReference>
<dbReference type="GO" id="GO:1901492">
    <property type="term" value="P:positive regulation of lymphangiogenesis"/>
    <property type="evidence" value="ECO:0007669"/>
    <property type="project" value="Ensembl"/>
</dbReference>
<dbReference type="GO" id="GO:0043410">
    <property type="term" value="P:positive regulation of MAPK cascade"/>
    <property type="evidence" value="ECO:0000314"/>
    <property type="project" value="BHF-UCL"/>
</dbReference>
<dbReference type="GO" id="GO:0060754">
    <property type="term" value="P:positive regulation of mast cell chemotaxis"/>
    <property type="evidence" value="ECO:0000314"/>
    <property type="project" value="UniProtKB"/>
</dbReference>
<dbReference type="GO" id="GO:0002052">
    <property type="term" value="P:positive regulation of neuroblast proliferation"/>
    <property type="evidence" value="ECO:0000250"/>
    <property type="project" value="BHF-UCL"/>
</dbReference>
<dbReference type="GO" id="GO:0045669">
    <property type="term" value="P:positive regulation of osteoblast differentiation"/>
    <property type="evidence" value="ECO:0007669"/>
    <property type="project" value="Ensembl"/>
</dbReference>
<dbReference type="GO" id="GO:0050731">
    <property type="term" value="P:positive regulation of peptidyl-tyrosine phosphorylation"/>
    <property type="evidence" value="ECO:0000314"/>
    <property type="project" value="UniProtKB"/>
</dbReference>
<dbReference type="GO" id="GO:0051897">
    <property type="term" value="P:positive regulation of phosphatidylinositol 3-kinase/protein kinase B signal transduction"/>
    <property type="evidence" value="ECO:0000314"/>
    <property type="project" value="BHF-UCL"/>
</dbReference>
<dbReference type="GO" id="GO:0050927">
    <property type="term" value="P:positive regulation of positive chemotaxis"/>
    <property type="evidence" value="ECO:0000314"/>
    <property type="project" value="BHF-UCL"/>
</dbReference>
<dbReference type="GO" id="GO:0031954">
    <property type="term" value="P:positive regulation of protein autophosphorylation"/>
    <property type="evidence" value="ECO:0000314"/>
    <property type="project" value="UniProtKB"/>
</dbReference>
<dbReference type="GO" id="GO:1902966">
    <property type="term" value="P:positive regulation of protein localization to early endosome"/>
    <property type="evidence" value="ECO:0000314"/>
    <property type="project" value="BHF-UCL"/>
</dbReference>
<dbReference type="GO" id="GO:0001934">
    <property type="term" value="P:positive regulation of protein phosphorylation"/>
    <property type="evidence" value="ECO:0000314"/>
    <property type="project" value="UniProtKB"/>
</dbReference>
<dbReference type="GO" id="GO:0031334">
    <property type="term" value="P:positive regulation of protein-containing complex assembly"/>
    <property type="evidence" value="ECO:0000314"/>
    <property type="project" value="UniProtKB"/>
</dbReference>
<dbReference type="GO" id="GO:0002092">
    <property type="term" value="P:positive regulation of receptor internalization"/>
    <property type="evidence" value="ECO:0000314"/>
    <property type="project" value="BHF-UCL"/>
</dbReference>
<dbReference type="GO" id="GO:1903672">
    <property type="term" value="P:positive regulation of sprouting angiogenesis"/>
    <property type="evidence" value="ECO:0000314"/>
    <property type="project" value="BHF-UCL"/>
</dbReference>
<dbReference type="GO" id="GO:0045944">
    <property type="term" value="P:positive regulation of transcription by RNA polymerase II"/>
    <property type="evidence" value="ECO:0000314"/>
    <property type="project" value="BHF-UCL"/>
</dbReference>
<dbReference type="GO" id="GO:1901165">
    <property type="term" value="P:positive regulation of trophoblast cell migration"/>
    <property type="evidence" value="ECO:0000315"/>
    <property type="project" value="BHF-UCL"/>
</dbReference>
<dbReference type="GO" id="GO:1900748">
    <property type="term" value="P:positive regulation of vascular endothelial growth factor signaling pathway"/>
    <property type="evidence" value="ECO:0000314"/>
    <property type="project" value="ComplexPortal"/>
</dbReference>
<dbReference type="GO" id="GO:0043117">
    <property type="term" value="P:positive regulation of vascular permeability"/>
    <property type="evidence" value="ECO:0000314"/>
    <property type="project" value="ARUK-UCL"/>
</dbReference>
<dbReference type="GO" id="GO:0031077">
    <property type="term" value="P:post-embryonic camera-type eye development"/>
    <property type="evidence" value="ECO:0000250"/>
    <property type="project" value="BHF-UCL"/>
</dbReference>
<dbReference type="GO" id="GO:0060319">
    <property type="term" value="P:primitive erythrocyte differentiation"/>
    <property type="evidence" value="ECO:0000250"/>
    <property type="project" value="BHF-UCL"/>
</dbReference>
<dbReference type="GO" id="GO:0008360">
    <property type="term" value="P:regulation of cell shape"/>
    <property type="evidence" value="ECO:0000314"/>
    <property type="project" value="BHF-UCL"/>
</dbReference>
<dbReference type="GO" id="GO:1901532">
    <property type="term" value="P:regulation of hematopoietic progenitor cell differentiation"/>
    <property type="evidence" value="ECO:0007669"/>
    <property type="project" value="Ensembl"/>
</dbReference>
<dbReference type="GO" id="GO:0010749">
    <property type="term" value="P:regulation of nitric oxide mediated signal transduction"/>
    <property type="evidence" value="ECO:0000314"/>
    <property type="project" value="MGI"/>
</dbReference>
<dbReference type="GO" id="GO:0006357">
    <property type="term" value="P:regulation of transcription by RNA polymerase II"/>
    <property type="evidence" value="ECO:0000315"/>
    <property type="project" value="BHF-UCL"/>
</dbReference>
<dbReference type="GO" id="GO:0001666">
    <property type="term" value="P:response to hypoxia"/>
    <property type="evidence" value="ECO:0000314"/>
    <property type="project" value="UniProtKB"/>
</dbReference>
<dbReference type="GO" id="GO:0031290">
    <property type="term" value="P:retinal ganglion cell axon guidance"/>
    <property type="evidence" value="ECO:0000250"/>
    <property type="project" value="BHF-UCL"/>
</dbReference>
<dbReference type="GO" id="GO:0002040">
    <property type="term" value="P:sprouting angiogenesis"/>
    <property type="evidence" value="ECO:0000318"/>
    <property type="project" value="GO_Central"/>
</dbReference>
<dbReference type="GO" id="GO:0043129">
    <property type="term" value="P:surfactant homeostasis"/>
    <property type="evidence" value="ECO:0000250"/>
    <property type="project" value="BHF-UCL"/>
</dbReference>
<dbReference type="GO" id="GO:0035148">
    <property type="term" value="P:tube formation"/>
    <property type="evidence" value="ECO:0000314"/>
    <property type="project" value="UniProtKB"/>
</dbReference>
<dbReference type="GO" id="GO:0048010">
    <property type="term" value="P:vascular endothelial growth factor receptor signaling pathway"/>
    <property type="evidence" value="ECO:0000314"/>
    <property type="project" value="BHF-UCL"/>
</dbReference>
<dbReference type="GO" id="GO:0036324">
    <property type="term" value="P:vascular endothelial growth factor receptor-2 signaling pathway"/>
    <property type="evidence" value="ECO:0000315"/>
    <property type="project" value="BHF-UCL"/>
</dbReference>
<dbReference type="GO" id="GO:0038084">
    <property type="term" value="P:vascular endothelial growth factor signaling pathway"/>
    <property type="evidence" value="ECO:0000314"/>
    <property type="project" value="BHF-UCL"/>
</dbReference>
<dbReference type="GO" id="GO:0061042">
    <property type="term" value="P:vascular wound healing"/>
    <property type="evidence" value="ECO:0000315"/>
    <property type="project" value="BHF-UCL"/>
</dbReference>
<dbReference type="GO" id="GO:0001570">
    <property type="term" value="P:vasculogenesis"/>
    <property type="evidence" value="ECO:0000304"/>
    <property type="project" value="UniProtKB"/>
</dbReference>
<dbReference type="GO" id="GO:0042311">
    <property type="term" value="P:vasodilation"/>
    <property type="evidence" value="ECO:0007669"/>
    <property type="project" value="Ensembl"/>
</dbReference>
<dbReference type="GO" id="GO:0038190">
    <property type="term" value="P:VEGF-activated neuropilin signaling pathway"/>
    <property type="evidence" value="ECO:0000315"/>
    <property type="project" value="BHF-UCL"/>
</dbReference>
<dbReference type="CDD" id="cd00135">
    <property type="entry name" value="PDGF"/>
    <property type="match status" value="1"/>
</dbReference>
<dbReference type="FunFam" id="2.10.160.10:FF:000001">
    <property type="entry name" value="Vascular endothelial growth factor A"/>
    <property type="match status" value="1"/>
</dbReference>
<dbReference type="FunFam" id="2.10.90.10:FF:000009">
    <property type="entry name" value="Vascular endothelial growth factor A"/>
    <property type="match status" value="1"/>
</dbReference>
<dbReference type="Gene3D" id="2.10.90.10">
    <property type="entry name" value="Cystine-knot cytokines"/>
    <property type="match status" value="1"/>
</dbReference>
<dbReference type="Gene3D" id="2.10.160.10">
    <property type="entry name" value="Vascular endothelial growth factor, heparin-binding domain"/>
    <property type="match status" value="1"/>
</dbReference>
<dbReference type="InterPro" id="IPR029034">
    <property type="entry name" value="Cystine-knot_cytokine"/>
</dbReference>
<dbReference type="InterPro" id="IPR023581">
    <property type="entry name" value="PD_growth_factor_CS"/>
</dbReference>
<dbReference type="InterPro" id="IPR000072">
    <property type="entry name" value="PDGF/VEGF_dom"/>
</dbReference>
<dbReference type="InterPro" id="IPR050507">
    <property type="entry name" value="PDGF/VEGF_growth_factor"/>
</dbReference>
<dbReference type="InterPro" id="IPR027928">
    <property type="entry name" value="VEGF_C"/>
</dbReference>
<dbReference type="InterPro" id="IPR036841">
    <property type="entry name" value="VEGF_C_sf"/>
</dbReference>
<dbReference type="PANTHER" id="PTHR12025">
    <property type="entry name" value="VASCULAR ENDOTHELIAL GROWTH FACTOR"/>
    <property type="match status" value="1"/>
</dbReference>
<dbReference type="PANTHER" id="PTHR12025:SF5">
    <property type="entry name" value="VASCULAR ENDOTHELIAL GROWTH FACTOR A, LONG FORM"/>
    <property type="match status" value="1"/>
</dbReference>
<dbReference type="Pfam" id="PF00341">
    <property type="entry name" value="PDGF"/>
    <property type="match status" value="1"/>
</dbReference>
<dbReference type="Pfam" id="PF14554">
    <property type="entry name" value="VEGF_C"/>
    <property type="match status" value="1"/>
</dbReference>
<dbReference type="SMART" id="SM00141">
    <property type="entry name" value="PDGF"/>
    <property type="match status" value="1"/>
</dbReference>
<dbReference type="SUPFAM" id="SSF57501">
    <property type="entry name" value="Cystine-knot cytokines"/>
    <property type="match status" value="1"/>
</dbReference>
<dbReference type="SUPFAM" id="SSF57593">
    <property type="entry name" value="Heparin-binding domain from vascular endothelial growth factor"/>
    <property type="match status" value="1"/>
</dbReference>
<dbReference type="PROSITE" id="PS00249">
    <property type="entry name" value="PDGF_1"/>
    <property type="match status" value="1"/>
</dbReference>
<dbReference type="PROSITE" id="PS50278">
    <property type="entry name" value="PDGF_2"/>
    <property type="match status" value="1"/>
</dbReference>
<accession>P15692</accession>
<accession>B5BU86</accession>
<accession>H0Y2S8</accession>
<accession>H0Y407</accession>
<accession>H0Y414</accession>
<accession>H0Y462</accession>
<accession>H0Y8N2</accession>
<accession>H3BLW7</accession>
<accession>O60720</accession>
<accession>O75875</accession>
<accession>Q074Z4</accession>
<accession>Q16889</accession>
<accession>Q5UB46</accession>
<accession>Q6P0P5</accession>
<accession>Q96KJ0</accession>
<accession>Q96L82</accession>
<accession>Q96NW5</accession>
<accession>Q9H1W8</accession>
<accession>Q9H1W9</accession>
<accession>Q9UH58</accession>
<accession>Q9UL23</accession>
<evidence type="ECO:0000250" key="1">
    <source>
        <dbReference type="UniProtKB" id="P16612"/>
    </source>
</evidence>
<evidence type="ECO:0000250" key="2">
    <source>
        <dbReference type="UniProtKB" id="Q00731"/>
    </source>
</evidence>
<evidence type="ECO:0000256" key="3">
    <source>
        <dbReference type="SAM" id="MobiDB-lite"/>
    </source>
</evidence>
<evidence type="ECO:0000269" key="4">
    <source>
    </source>
</evidence>
<evidence type="ECO:0000269" key="5">
    <source>
    </source>
</evidence>
<evidence type="ECO:0000269" key="6">
    <source>
    </source>
</evidence>
<evidence type="ECO:0000269" key="7">
    <source>
    </source>
</evidence>
<evidence type="ECO:0000269" key="8">
    <source>
    </source>
</evidence>
<evidence type="ECO:0000269" key="9">
    <source>
    </source>
</evidence>
<evidence type="ECO:0000269" key="10">
    <source>
    </source>
</evidence>
<evidence type="ECO:0000269" key="11">
    <source>
    </source>
</evidence>
<evidence type="ECO:0000269" key="12">
    <source>
    </source>
</evidence>
<evidence type="ECO:0000269" key="13">
    <source>
    </source>
</evidence>
<evidence type="ECO:0000269" key="14">
    <source>
    </source>
</evidence>
<evidence type="ECO:0000269" key="15">
    <source>
    </source>
</evidence>
<evidence type="ECO:0000269" key="16">
    <source>
    </source>
</evidence>
<evidence type="ECO:0000269" key="17">
    <source>
    </source>
</evidence>
<evidence type="ECO:0000269" key="18">
    <source>
    </source>
</evidence>
<evidence type="ECO:0000269" key="19">
    <source>
    </source>
</evidence>
<evidence type="ECO:0000269" key="20">
    <source>
    </source>
</evidence>
<evidence type="ECO:0000269" key="21">
    <source>
    </source>
</evidence>
<evidence type="ECO:0000269" key="22">
    <source>
    </source>
</evidence>
<evidence type="ECO:0000269" key="23">
    <source>
    </source>
</evidence>
<evidence type="ECO:0000269" key="24">
    <source>
    </source>
</evidence>
<evidence type="ECO:0000269" key="25">
    <source ref="12"/>
</evidence>
<evidence type="ECO:0000269" key="26">
    <source ref="16"/>
</evidence>
<evidence type="ECO:0000303" key="27">
    <source>
    </source>
</evidence>
<evidence type="ECO:0000303" key="28">
    <source>
    </source>
</evidence>
<evidence type="ECO:0000305" key="29"/>
<evidence type="ECO:0007829" key="30">
    <source>
        <dbReference type="PDB" id="1KMX"/>
    </source>
</evidence>
<evidence type="ECO:0007829" key="31">
    <source>
        <dbReference type="PDB" id="1MKK"/>
    </source>
</evidence>
<evidence type="ECO:0007829" key="32">
    <source>
        <dbReference type="PDB" id="4DEQ"/>
    </source>
</evidence>
<evidence type="ECO:0007829" key="33">
    <source>
        <dbReference type="PDB" id="4GLN"/>
    </source>
</evidence>